<gene>
    <name evidence="2" type="primary">S</name>
    <name type="ORF">2</name>
</gene>
<comment type="function">
    <molecule>Spike glycoprotein</molecule>
    <text evidence="19">May down-regulate host tetherin (BST2) by lysosomal degradation, thereby counteracting its antiviral activity.</text>
</comment>
<comment type="function">
    <molecule>Spike protein S1</molecule>
    <text evidence="2 6 8">Attaches the virion to the cell membrane by interacting with host receptor, initiating the infection (By similarity). Binding to human ACE2 and CLEC4M/DC-SIGNR receptors and internalization of the virus into the endosomes of the host cell induces conformational changes in the S glycoprotein. Proteolysis by cathepsin CTSL may unmask the fusion peptide of S2 and activate membrane fusion within endosomes.</text>
</comment>
<comment type="function">
    <molecule>Spike protein S2</molecule>
    <text evidence="2">Mediates fusion of the virion and cellular membranes by acting as a class I viral fusion protein. Under the current model, the protein has at least three conformational states: pre-fusion native state, pre-hairpin intermediate state, and post-fusion hairpin state. During viral and target cell membrane fusion, the coiled coil regions (heptad repeats) assume a trimer-of-hairpins structure, positioning the fusion peptide in close proximity to the C-terminal region of the ectodomain. The formation of this structure appears to drive apposition and subsequent fusion of viral and target cell membranes.</text>
</comment>
<comment type="function">
    <molecule>Spike protein S2'</molecule>
    <text evidence="2 16">Acts as a viral fusion peptide which is unmasked following S2 cleavage occurring upon virus endocytosis.</text>
</comment>
<comment type="subunit">
    <text evidence="2 5 6 7 8 11 13">Homotrimer; each monomer consists of a S1 and a S2 subunit. The resulting peplomers protrude from the virus surface as spikes (By similarity). Binds to human and palm civet ACE2 and human CLEC4M/DC-SIGNR. Interacts with the accessory proteins 3a and 7a.</text>
</comment>
<comment type="interaction">
    <interactant intactId="EBI-15582614">
        <id>P59594</id>
    </interactant>
    <interactant intactId="EBI-25492879">
        <id>P59635</id>
        <label>7a</label>
    </interactant>
    <organismsDiffer>false</organismsDiffer>
    <experiments>3</experiments>
</comment>
<comment type="interaction">
    <interactant intactId="EBI-15582614">
        <id>P59594</id>
    </interactant>
    <interactant intactId="EBI-15582614">
        <id>P59594</id>
        <label>S</label>
    </interactant>
    <organismsDiffer>false</organismsDiffer>
    <experiments>22</experiments>
</comment>
<comment type="interaction">
    <interactant intactId="EBI-15582614">
        <id>P59594</id>
    </interactant>
    <interactant intactId="EBI-25498790">
        <id>Q56NL1</id>
        <label>ACE2</label>
    </interactant>
    <organismsDiffer>true</organismsDiffer>
    <experiments>4</experiments>
</comment>
<comment type="interaction">
    <interactant intactId="EBI-15582614">
        <id>P59594</id>
    </interactant>
    <interactant intactId="EBI-25503774">
        <id>Q5EGZ1</id>
        <label>Ace2</label>
    </interactant>
    <organismsDiffer>true</organismsDiffer>
    <experiments>2</experiments>
</comment>
<comment type="interaction">
    <interactant intactId="EBI-15582614">
        <id>P59594</id>
    </interactant>
    <interactant intactId="EBI-7730807">
        <id>Q9BYF1</id>
        <label>ACE2</label>
    </interactant>
    <organismsDiffer>true</organismsDiffer>
    <experiments>56</experiments>
</comment>
<comment type="interaction">
    <interactant intactId="EBI-15582614">
        <id>P59594</id>
    </interactant>
    <interactant intactId="EBI-1220160">
        <id>P07711</id>
        <label>CTSL</label>
    </interactant>
    <organismsDiffer>true</organismsDiffer>
    <experiments>2</experiments>
</comment>
<comment type="interaction">
    <interactant intactId="EBI-15582614">
        <id>P59594</id>
    </interactant>
    <interactant intactId="EBI-711990">
        <id>O00303</id>
        <label>EIF3F</label>
    </interactant>
    <organismsDiffer>true</organismsDiffer>
    <experiments>5</experiments>
</comment>
<comment type="interaction">
    <interactant intactId="EBI-25475261">
        <id>PRO_0000037209</id>
    </interactant>
    <interactant intactId="EBI-7730807">
        <id>Q9BYF1</id>
        <label>ACE2</label>
    </interactant>
    <organismsDiffer>true</organismsDiffer>
    <experiments>3</experiments>
</comment>
<comment type="subcellular location">
    <subcellularLocation>
        <location evidence="2 10">Virion membrane</location>
        <topology evidence="2 10">Single-pass type I membrane protein</topology>
    </subcellularLocation>
    <subcellularLocation>
        <location evidence="2 17">Host endoplasmic reticulum-Golgi intermediate compartment membrane</location>
        <topology evidence="2 10">Single-pass type I membrane protein</topology>
    </subcellularLocation>
    <subcellularLocation>
        <location evidence="2 10">Host cell membrane</location>
        <topology evidence="2 10">Single-pass type I membrane protein</topology>
    </subcellularLocation>
    <text evidence="2 17">Accumulates in the endoplasmic reticulum-Golgi intermediate compartment, where it participates in virus particle assembly. Colocalizes with S in the host endoplasmic reticulum-Golgi intermediate compartment (PubMed:20861307). Some S oligomers are transported to the host plasma membrane, where they may mediate cell-cell fusion.</text>
</comment>
<comment type="domain">
    <text>The KxHxx motif seems to function as an ER retrieval and binds COPI in vitro.</text>
</comment>
<comment type="domain">
    <text evidence="2 18">Fusion peptide 1 (FP1) and fusion peptide 2 (FP2) function cooperatively and have a membrane-ordering effect on lipid headgroups and shallow hydrophobic regions of target bilayers. They are considered as two domains of an extended, bipartite FP. The membrane-ordering activity is calcium-dependent and also dependent on correct folding, which is maintained by an internal disulfide bond in FP2.</text>
</comment>
<comment type="PTM">
    <text evidence="14">The cytoplasmic Cys-rich domain is palmitoylated. Spike glycoprotein is digested by cathepsin CTSL within endosomes.</text>
</comment>
<comment type="PTM">
    <text evidence="2">Specific enzymatic cleavages in vivo yield mature proteins. The precursor is processed into S1 and S2 by host cell furin or another cellular protease to yield the mature S1 and S2 proteins. Additionally, a second cleavage leads to the release of a fusion peptide after viral attachment to host cell receptor.</text>
</comment>
<comment type="PTM">
    <text evidence="2">The cytoplasmic Cys-rich domain is palmitoylated. Spike glycoprotein is digested within host endosomes.</text>
</comment>
<comment type="miscellaneous">
    <text>Tor2 is the prototype of the virus isolated during the severe SARS outbreak in 2002-2003. GD03 has been isolated from the second mild SARS outbreak in winter 2003-2004. SZ3 has been isolated from palm civet, the presumed animal reservoir. The spike proteins from those three isolates display a strong affinity for palm civet ACE2 receptor, whereas only the Tor2 spike protein efficiently binds human ACE2. This may explain the high pathogenicity of Tor2 virus, whose spike is highly adapted to the human host. Therefore, the lack of severity of disease during the 2003-2004 outbreak could be due to the incomplete adaptation of GD03 virus to bind human ACE2. Mutation Asn-479 and Thr-487 in palm civet coronavirus seems necessary and sufficient for the virus to acquire the ability to efficiently infect humans.</text>
</comment>
<comment type="similarity">
    <text evidence="2">Belongs to the betacoronaviruses spike protein family.</text>
</comment>
<name>SPIKE_SARS</name>
<accession>P59594</accession>
<accession>Q6QU82</accession>
<accession>Q7T696</accession>
<accession>Q7TA19</accession>
<accession>Q7TFA2</accession>
<accession>Q7TFB1</accession>
<accession>Q80BV6</accession>
<evidence type="ECO:0000250" key="1">
    <source>
        <dbReference type="UniProtKB" id="P0DTC2"/>
    </source>
</evidence>
<evidence type="ECO:0000255" key="2">
    <source>
        <dbReference type="HAMAP-Rule" id="MF_04099"/>
    </source>
</evidence>
<evidence type="ECO:0000255" key="3">
    <source>
        <dbReference type="PROSITE-ProRule" id="PRU01269"/>
    </source>
</evidence>
<evidence type="ECO:0000255" key="4">
    <source>
        <dbReference type="PROSITE-ProRule" id="PRU01270"/>
    </source>
</evidence>
<evidence type="ECO:0000269" key="5">
    <source>
    </source>
</evidence>
<evidence type="ECO:0000269" key="6">
    <source>
    </source>
</evidence>
<evidence type="ECO:0000269" key="7">
    <source>
    </source>
</evidence>
<evidence type="ECO:0000269" key="8">
    <source>
    </source>
</evidence>
<evidence type="ECO:0000269" key="9">
    <source>
    </source>
</evidence>
<evidence type="ECO:0000269" key="10">
    <source>
    </source>
</evidence>
<evidence type="ECO:0000269" key="11">
    <source>
    </source>
</evidence>
<evidence type="ECO:0000269" key="12">
    <source>
    </source>
</evidence>
<evidence type="ECO:0000269" key="13">
    <source>
    </source>
</evidence>
<evidence type="ECO:0000269" key="14">
    <source>
    </source>
</evidence>
<evidence type="ECO:0000269" key="15">
    <source>
    </source>
</evidence>
<evidence type="ECO:0000269" key="16">
    <source>
    </source>
</evidence>
<evidence type="ECO:0000269" key="17">
    <source>
    </source>
</evidence>
<evidence type="ECO:0000269" key="18">
    <source>
    </source>
</evidence>
<evidence type="ECO:0000269" key="19">
    <source>
    </source>
</evidence>
<evidence type="ECO:0000305" key="20">
    <source>
    </source>
</evidence>
<evidence type="ECO:0007829" key="21">
    <source>
        <dbReference type="PDB" id="1ZVA"/>
    </source>
</evidence>
<evidence type="ECO:0007829" key="22">
    <source>
        <dbReference type="PDB" id="2BEQ"/>
    </source>
</evidence>
<evidence type="ECO:0007829" key="23">
    <source>
        <dbReference type="PDB" id="2BEZ"/>
    </source>
</evidence>
<evidence type="ECO:0007829" key="24">
    <source>
        <dbReference type="PDB" id="2DD8"/>
    </source>
</evidence>
<evidence type="ECO:0007829" key="25">
    <source>
        <dbReference type="PDB" id="2FXP"/>
    </source>
</evidence>
<evidence type="ECO:0007829" key="26">
    <source>
        <dbReference type="PDB" id="2GHV"/>
    </source>
</evidence>
<evidence type="ECO:0007829" key="27">
    <source>
        <dbReference type="PDB" id="2RUM"/>
    </source>
</evidence>
<evidence type="ECO:0007829" key="28">
    <source>
        <dbReference type="PDB" id="5X58"/>
    </source>
</evidence>
<evidence type="ECO:0007829" key="29">
    <source>
        <dbReference type="PDB" id="6CRV"/>
    </source>
</evidence>
<evidence type="ECO:0007829" key="30">
    <source>
        <dbReference type="PDB" id="6CRZ"/>
    </source>
</evidence>
<evidence type="ECO:0007829" key="31">
    <source>
        <dbReference type="PDB" id="6WAQ"/>
    </source>
</evidence>
<evidence type="ECO:0007829" key="32">
    <source>
        <dbReference type="PDB" id="7SG4"/>
    </source>
</evidence>
<evidence type="ECO:0007829" key="33">
    <source>
        <dbReference type="PDB" id="7Y3N"/>
    </source>
</evidence>
<evidence type="ECO:0007829" key="34">
    <source>
        <dbReference type="PDB" id="7ZH1"/>
    </source>
</evidence>
<evidence type="ECO:0007829" key="35">
    <source>
        <dbReference type="PDB" id="8H0X"/>
    </source>
</evidence>
<evidence type="ECO:0007829" key="36">
    <source>
        <dbReference type="PDB" id="8H0Y"/>
    </source>
</evidence>
<evidence type="ECO:0007829" key="37">
    <source>
        <dbReference type="PDB" id="8H0Z"/>
    </source>
</evidence>
<evidence type="ECO:0007829" key="38">
    <source>
        <dbReference type="PDB" id="8H10"/>
    </source>
</evidence>
<evidence type="ECO:0007829" key="39">
    <source>
        <dbReference type="PDB" id="8H11"/>
    </source>
</evidence>
<evidence type="ECO:0007829" key="40">
    <source>
        <dbReference type="PDB" id="8H16"/>
    </source>
</evidence>
<evidence type="ECO:0007829" key="41">
    <source>
        <dbReference type="PDB" id="8KDM"/>
    </source>
</evidence>
<evidence type="ECO:0007829" key="42">
    <source>
        <dbReference type="PDB" id="8KDS"/>
    </source>
</evidence>
<evidence type="ECO:0007829" key="43">
    <source>
        <dbReference type="PDB" id="8TC5"/>
    </source>
</evidence>
<organism>
    <name type="scientific">Severe acute respiratory syndrome coronavirus</name>
    <name type="common">SARS-CoV</name>
    <dbReference type="NCBI Taxonomy" id="694009"/>
    <lineage>
        <taxon>Viruses</taxon>
        <taxon>Riboviria</taxon>
        <taxon>Orthornavirae</taxon>
        <taxon>Pisuviricota</taxon>
        <taxon>Pisoniviricetes</taxon>
        <taxon>Nidovirales</taxon>
        <taxon>Cornidovirineae</taxon>
        <taxon>Coronaviridae</taxon>
        <taxon>Orthocoronavirinae</taxon>
        <taxon>Betacoronavirus</taxon>
        <taxon>Sarbecovirus</taxon>
    </lineage>
</organism>
<organismHost>
    <name type="scientific">Homo sapiens</name>
    <name type="common">Human</name>
    <dbReference type="NCBI Taxonomy" id="9606"/>
</organismHost>
<organismHost>
    <name type="scientific">Paguma larvata</name>
    <name type="common">Masked palm civet</name>
    <dbReference type="NCBI Taxonomy" id="9675"/>
</organismHost>
<protein>
    <recommendedName>
        <fullName evidence="2">Spike glycoprotein</fullName>
        <shortName evidence="2">S glycoprotein</shortName>
    </recommendedName>
    <alternativeName>
        <fullName evidence="2">E2</fullName>
    </alternativeName>
    <alternativeName>
        <fullName evidence="2">Peplomer protein</fullName>
    </alternativeName>
    <component>
        <recommendedName>
            <fullName evidence="2">Spike protein S1</fullName>
        </recommendedName>
    </component>
    <component>
        <recommendedName>
            <fullName evidence="2">Spike protein S2</fullName>
        </recommendedName>
    </component>
    <component>
        <recommendedName>
            <fullName evidence="2">Spike protein S2'</fullName>
        </recommendedName>
    </component>
</protein>
<keyword id="KW-0002">3D-structure</keyword>
<keyword id="KW-0175">Coiled coil</keyword>
<keyword id="KW-1015">Disulfide bond</keyword>
<keyword id="KW-1170">Fusion of virus membrane with host endosomal membrane</keyword>
<keyword id="KW-1168">Fusion of virus membrane with host membrane</keyword>
<keyword id="KW-0325">Glycoprotein</keyword>
<keyword id="KW-1032">Host cell membrane</keyword>
<keyword id="KW-1043">Host membrane</keyword>
<keyword id="KW-0945">Host-virus interaction</keyword>
<keyword id="KW-1090">Inhibition of host innate immune response by virus</keyword>
<keyword id="KW-1084">Inhibition of host tetherin by virus</keyword>
<keyword id="KW-0449">Lipoprotein</keyword>
<keyword id="KW-0472">Membrane</keyword>
<keyword id="KW-0564">Palmitate</keyword>
<keyword id="KW-1185">Reference proteome</keyword>
<keyword id="KW-0732">Signal</keyword>
<keyword id="KW-0812">Transmembrane</keyword>
<keyword id="KW-1133">Transmembrane helix</keyword>
<keyword id="KW-1161">Viral attachment to host cell</keyword>
<keyword id="KW-0261">Viral envelope protein</keyword>
<keyword id="KW-0899">Viral immunoevasion</keyword>
<keyword id="KW-1162">Viral penetration into host cytoplasm</keyword>
<keyword id="KW-0946">Virion</keyword>
<keyword id="KW-0843">Virulence</keyword>
<keyword id="KW-1160">Virus entry into host cell</keyword>
<feature type="signal peptide" evidence="2">
    <location>
        <begin position="1"/>
        <end position="13"/>
    </location>
</feature>
<feature type="chain" id="PRO_0000037208" description="Spike glycoprotein">
    <location>
        <begin position="14"/>
        <end position="1255"/>
    </location>
</feature>
<feature type="chain" id="PRO_0000037209" description="Spike protein S1" evidence="2">
    <location>
        <begin position="14"/>
        <end position="667"/>
    </location>
</feature>
<feature type="chain" id="PRO_0000037210" description="Spike protein S2" evidence="2">
    <location>
        <begin position="668"/>
        <end position="1255"/>
    </location>
</feature>
<feature type="chain" id="PRO_0000444082" description="Spike protein S2'" evidence="2">
    <location>
        <begin position="798"/>
        <end position="1255"/>
    </location>
</feature>
<feature type="topological domain" description="Extracellular" evidence="2">
    <location>
        <begin position="14"/>
        <end position="1195"/>
    </location>
</feature>
<feature type="transmembrane region" description="Helical" evidence="2">
    <location>
        <begin position="1196"/>
        <end position="1216"/>
    </location>
</feature>
<feature type="topological domain" description="Cytoplasmic" evidence="2">
    <location>
        <begin position="1217"/>
        <end position="1255"/>
    </location>
</feature>
<feature type="domain" description="BetaCoV S1-NTD" evidence="4">
    <location>
        <begin position="14"/>
        <end position="290"/>
    </location>
</feature>
<feature type="domain" description="BetaCoV S1-CTD" evidence="3">
    <location>
        <begin position="321"/>
        <end position="513"/>
    </location>
</feature>
<feature type="region of interest" description="Receptor-binding domain (RBD)" evidence="1">
    <location>
        <begin position="306"/>
        <end position="527"/>
    </location>
</feature>
<feature type="region of interest" description="Receptor-binding motif; binding to human ACE2">
    <location>
        <begin position="424"/>
        <end position="494"/>
    </location>
</feature>
<feature type="region of interest" description="Fusion peptide 1" evidence="2 20">
    <location>
        <begin position="798"/>
        <end position="819"/>
    </location>
</feature>
<feature type="region of interest" description="Fusion peptide 2" evidence="2 20">
    <location>
        <begin position="817"/>
        <end position="837"/>
    </location>
</feature>
<feature type="region of interest" description="Heptad repeat 1" evidence="2">
    <location>
        <begin position="902"/>
        <end position="952"/>
    </location>
</feature>
<feature type="region of interest" description="Heptad repeat 2" evidence="2">
    <location>
        <begin position="1145"/>
        <end position="1184"/>
    </location>
</feature>
<feature type="coiled-coil region" evidence="2">
    <location>
        <begin position="931"/>
        <end position="975"/>
    </location>
</feature>
<feature type="coiled-coil region" evidence="2">
    <location>
        <begin position="1157"/>
        <end position="1185"/>
    </location>
</feature>
<feature type="short sequence motif" description="KxHxx" evidence="2">
    <location>
        <begin position="1251"/>
        <end position="1255"/>
    </location>
</feature>
<feature type="site" description="Cleavage" evidence="2 16">
    <location>
        <begin position="667"/>
        <end position="668"/>
    </location>
</feature>
<feature type="site" description="Cleavage" evidence="2 16">
    <location>
        <begin position="797"/>
        <end position="798"/>
    </location>
</feature>
<feature type="glycosylation site" description="N-linked (GlcNAc...) asparagine; by host" evidence="2">
    <location>
        <position position="29"/>
    </location>
</feature>
<feature type="glycosylation site" description="N-linked (GlcNAc...) asparagine; by host" evidence="2">
    <location>
        <position position="65"/>
    </location>
</feature>
<feature type="glycosylation site" description="N-linked (GlcNAc...) asparagine; by host" evidence="2">
    <location>
        <position position="73"/>
    </location>
</feature>
<feature type="glycosylation site" description="N-linked (GlcNAc...) asparagine; by host" evidence="2">
    <location>
        <position position="109"/>
    </location>
</feature>
<feature type="glycosylation site" description="N-linked (GlcNAc...) asparagine; by host" evidence="2">
    <location>
        <position position="118"/>
    </location>
</feature>
<feature type="glycosylation site" description="N-linked (GlcNAc...) asparagine; by host" evidence="2">
    <location>
        <position position="119"/>
    </location>
</feature>
<feature type="glycosylation site" description="N-linked (GlcNAc...) asparagine; by host" evidence="2">
    <location>
        <position position="158"/>
    </location>
</feature>
<feature type="glycosylation site" description="N-linked (GlcNAc...) asparagine; by host" evidence="2">
    <location>
        <position position="227"/>
    </location>
</feature>
<feature type="glycosylation site" description="N-linked (GlcNAc...) asparagine; by host" evidence="2">
    <location>
        <position position="269"/>
    </location>
</feature>
<feature type="glycosylation site" description="N-linked (GlcNAc...) asparagine; by host" evidence="2">
    <location>
        <position position="318"/>
    </location>
</feature>
<feature type="glycosylation site" description="N-linked (GlcNAc...) asparagine; by host" evidence="2">
    <location>
        <position position="330"/>
    </location>
</feature>
<feature type="glycosylation site" description="N-linked (GlcNAc...) asparagine; by host" evidence="2">
    <location>
        <position position="357"/>
    </location>
</feature>
<feature type="glycosylation site" description="N-linked (GlcNAc...) asparagine; by host" evidence="2">
    <location>
        <position position="589"/>
    </location>
</feature>
<feature type="glycosylation site" description="N-linked (GlcNAc...) asparagine; by host" evidence="2">
    <location>
        <position position="602"/>
    </location>
</feature>
<feature type="glycosylation site" description="N-linked (GlcNAc...) asparagine; by host" evidence="2">
    <location>
        <position position="691"/>
    </location>
</feature>
<feature type="glycosylation site" description="N-linked (GlcNAc...) asparagine; by host" evidence="2">
    <location>
        <position position="699"/>
    </location>
</feature>
<feature type="glycosylation site" description="N-linked (GlcNAc...) asparagine; by host" evidence="2">
    <location>
        <position position="783"/>
    </location>
</feature>
<feature type="glycosylation site" description="N-linked (GlcNAc...) asparagine; by host" evidence="2">
    <location>
        <position position="1056"/>
    </location>
</feature>
<feature type="glycosylation site" description="N-linked (GlcNAc...) asparagine; by host" evidence="2">
    <location>
        <position position="1080"/>
    </location>
</feature>
<feature type="glycosylation site" description="N-linked (GlcNAc...) asparagine; by host" evidence="2">
    <location>
        <position position="1116"/>
    </location>
</feature>
<feature type="glycosylation site" description="N-linked (GlcNAc...) asparagine; by host" evidence="2">
    <location>
        <position position="1140"/>
    </location>
</feature>
<feature type="glycosylation site" description="N-linked (GlcNAc...) asparagine; by host" evidence="2">
    <location>
        <position position="1155"/>
    </location>
</feature>
<feature type="glycosylation site" description="N-linked (GlcNAc...) asparagine; by host" evidence="2">
    <location>
        <position position="1176"/>
    </location>
</feature>
<feature type="disulfide bond" evidence="4">
    <location>
        <begin position="19"/>
        <end position="133"/>
    </location>
</feature>
<feature type="disulfide bond" evidence="4">
    <location>
        <begin position="128"/>
        <end position="159"/>
    </location>
</feature>
<feature type="disulfide bond" evidence="4">
    <location>
        <begin position="278"/>
        <end position="288"/>
    </location>
</feature>
<feature type="disulfide bond" evidence="3">
    <location>
        <begin position="323"/>
        <end position="348"/>
    </location>
</feature>
<feature type="disulfide bond" evidence="3">
    <location>
        <begin position="366"/>
        <end position="419"/>
    </location>
</feature>
<feature type="disulfide bond" evidence="3">
    <location>
        <begin position="378"/>
        <end position="511"/>
    </location>
</feature>
<feature type="disulfide bond">
    <location>
        <begin position="467"/>
        <end position="474"/>
    </location>
</feature>
<feature type="disulfide bond" evidence="2 20">
    <location>
        <begin position="822"/>
        <end position="833"/>
    </location>
</feature>
<feature type="sequence variant" description="In strain: Isolate GZ50.">
    <original>S</original>
    <variation>L</variation>
    <location>
        <position position="49"/>
    </location>
</feature>
<feature type="sequence variant" description="In strain: Isolate BJ01, Isolate BJ02, Isolate BJ03, Isolate GZ50, Isolate CUHK-W1, Isolate HKU-36871, Isolate GD01, Isolate GD03 and Isolate SZ3.">
    <original>G</original>
    <variation>D</variation>
    <location>
        <position position="77"/>
    </location>
</feature>
<feature type="sequence variant" description="In strain: Isolate GD03.">
    <original>N</original>
    <variation>D</variation>
    <location>
        <position position="78"/>
    </location>
</feature>
<feature type="sequence variant" description="In strain: Isolate Shanghai LY.">
    <original>N</original>
    <variation>S</variation>
    <location>
        <position position="118"/>
    </location>
</feature>
<feature type="sequence variant" description="In strain: Isolate GD03.">
    <original>A</original>
    <variation>V</variation>
    <location>
        <position position="139"/>
    </location>
</feature>
<feature type="sequence variant" description="In strain: Isolate BJ03.">
    <original>M</original>
    <variation>L</variation>
    <location>
        <position position="144"/>
    </location>
</feature>
<feature type="sequence variant" description="In strain: Isolate GD03.">
    <original>Q</original>
    <variation>R</variation>
    <location>
        <position position="147"/>
    </location>
</feature>
<feature type="sequence variant" description="In strain: Isolate Shanghai LY.">
    <original>F</original>
    <variation>S</variation>
    <location>
        <position position="193"/>
    </location>
</feature>
<feature type="sequence variant" description="In strain: Isolate SZ3.">
    <original>N</original>
    <variation>K</variation>
    <location>
        <position position="227"/>
    </location>
</feature>
<feature type="sequence variant" description="In strain: Isolate GD01 and Isolate SZ3.">
    <original>S</original>
    <variation>L</variation>
    <location>
        <position position="239"/>
    </location>
</feature>
<feature type="sequence variant" description="In strain: Isolate BJ01, Isolate BJ02, Isolate BJ03, Isolate BJ04, Isolate GZ50, Isolate CUHK-W1, Isolate HKU-36871, Isolate GD01, Isolate GD03 and Isolate SZ3.">
    <original>I</original>
    <variation>T</variation>
    <location>
        <position position="244"/>
    </location>
</feature>
<feature type="sequence variant" description="In strain: Isolate SZ3.">
    <original>T</original>
    <variation>K</variation>
    <location>
        <position position="261"/>
    </location>
</feature>
<feature type="sequence variant" description="In strain: Isolate GD01 and Isolate BJ02.">
    <original>G</original>
    <variation>R</variation>
    <location>
        <position position="311"/>
    </location>
</feature>
<feature type="sequence variant" description="In strain: Isolate GD01, Isolate GD03 and Isolate SZ3; no effect on affinity with either human or palm civet ACE2." evidence="9">
    <original>K</original>
    <variation>R</variation>
    <location>
        <position position="344"/>
    </location>
</feature>
<feature type="sequence variant" description="In strain: Isolate GD03 and Isolate SZ3; no effect on affinity with either human or palm civet ACE2." evidence="9">
    <original>F</original>
    <variation>S</variation>
    <location>
        <position position="360"/>
    </location>
</feature>
<feature type="sequence variant" description="In strain: Isolate Shanghai LY.">
    <original>R</original>
    <variation>G</variation>
    <location>
        <position position="426"/>
    </location>
</feature>
<feature type="sequence variant" description="In strain: Isolate Shanghai LY.">
    <original>N</original>
    <variation>D</variation>
    <location>
        <position position="437"/>
    </location>
</feature>
<feature type="sequence variant" description="In strain: Isolate GD03.">
    <original>L</original>
    <variation>P</variation>
    <location>
        <position position="472"/>
    </location>
</feature>
<feature type="sequence variant" description="In strain: Isolate SZ3; 20fold decrease of affinity with human ACE2; no effect on affinity with palm civet ACE2." evidence="9">
    <original>N</original>
    <variation>K</variation>
    <location>
        <position position="479"/>
    </location>
</feature>
<feature type="sequence variant" description="In strain: Isolate GD03.">
    <original>D</original>
    <variation>G</variation>
    <location>
        <position position="480"/>
    </location>
</feature>
<feature type="sequence variant" description="In strain: Isolate GD03 and Isolate SZ3; 20fold decrease of affinity with human ACE2; decrease of affinity with palm civet ACE2." evidence="9">
    <original>T</original>
    <variation>S</variation>
    <location>
        <position position="487"/>
    </location>
</feature>
<feature type="sequence variant" description="In strain: Isolate GD01.">
    <original>F</original>
    <variation>Y</variation>
    <location>
        <position position="501"/>
    </location>
</feature>
<feature type="sequence variant" description="In strain: Isolate Tor2 and Isolate Shanghai QXC1.">
    <original>S</original>
    <variation>A</variation>
    <location>
        <position position="577"/>
    </location>
</feature>
<feature type="sequence variant" description="In strain: Isolate Shanghai QXC1.">
    <original>D</original>
    <variation>N</variation>
    <location>
        <position position="605"/>
    </location>
</feature>
<feature type="sequence variant" description="In strain: Isolate SZ3.">
    <original>S</original>
    <variation>P</variation>
    <location>
        <position position="607"/>
    </location>
</feature>
<feature type="sequence variant" description="In strain: Isolate Shanghai QXC1.">
    <original>T</original>
    <variation>A</variation>
    <location>
        <position position="608"/>
    </location>
</feature>
<feature type="sequence variant" description="In strain: Isolate GD03.">
    <original>A</original>
    <variation>L</variation>
    <location>
        <position position="609"/>
    </location>
</feature>
<feature type="sequence variant" description="In strain: Isolate GD03.">
    <original>D</original>
    <variation>E</variation>
    <location>
        <position position="613"/>
    </location>
</feature>
<feature type="sequence variant" description="In strain: Isolate GD03 and Isolate SZ3.">
    <original>L</original>
    <variation>S</variation>
    <location>
        <position position="665"/>
    </location>
</feature>
<feature type="sequence variant" description="In strain: Isolate SZ3.">
    <original>S</original>
    <variation>L</variation>
    <location>
        <position position="701"/>
    </location>
</feature>
<feature type="sequence variant" description="In strain: Isolate SZ3.">
    <original>T</original>
    <variation>A</variation>
    <location>
        <position position="743"/>
    </location>
</feature>
<feature type="sequence variant" description="In strain: Isolate GD03.">
    <original>T</original>
    <variation>R</variation>
    <location>
        <position position="743"/>
    </location>
</feature>
<feature type="sequence variant" description="In strain: Isolate SZ3.">
    <original>A</original>
    <variation>V</variation>
    <location>
        <position position="754"/>
    </location>
</feature>
<feature type="sequence variant" description="In strain: Isolate GD03.">
    <original>A</original>
    <variation>V</variation>
    <location>
        <position position="765"/>
    </location>
</feature>
<feature type="sequence variant" description="In strain: Isolate GD01, Isolate GZ50, Isolate GD03 and Isolate SZ3.">
    <original>Y</original>
    <variation>D</variation>
    <location>
        <position position="778"/>
    </location>
</feature>
<feature type="sequence variant" description="In strain: Isolate GD01.">
    <original>P</original>
    <variation>S</variation>
    <location>
        <position position="794"/>
    </location>
</feature>
<feature type="sequence variant" description="In strain: Isolate Shanghai LY.">
    <original>L</original>
    <variation>P</variation>
    <location>
        <position position="804"/>
    </location>
</feature>
<feature type="sequence variant" description="In strain: Isolate BJ03.">
    <original>VS</original>
    <variation>LR</variation>
    <location>
        <begin position="860"/>
        <end position="861"/>
    </location>
</feature>
<feature type="sequence variant" description="In strain: Isolate SZ3.">
    <original>T</original>
    <variation>A</variation>
    <location>
        <position position="894"/>
    </location>
</feature>
<feature type="sequence variant" description="In strain: Isolate Shanghai LY.">
    <original>E</original>
    <variation>G</variation>
    <location>
        <position position="999"/>
    </location>
</feature>
<feature type="sequence variant" description="In strain: Isolate BJ04.">
    <original>R</original>
    <variation>M</variation>
    <location>
        <position position="1001"/>
    </location>
</feature>
<feature type="sequence variant" description="In strain: Isolate Shanghai QXC1.">
    <original>E</original>
    <variation>G</variation>
    <location>
        <position position="1132"/>
    </location>
</feature>
<feature type="sequence variant" description="In strain: Isolate Frankfurt 1 and Isolate FRA.">
    <original>L</original>
    <variation>F</variation>
    <location>
        <position position="1148"/>
    </location>
</feature>
<feature type="sequence variant" description="In strain: Isolate GD03 and Isolate SZ3.">
    <original>K</original>
    <variation>E</variation>
    <location>
        <position position="1163"/>
    </location>
</feature>
<feature type="mutagenesis site" description="No effect on human ACE2 binding in vitro." evidence="6">
    <original>C</original>
    <variation>A</variation>
    <location>
        <position position="323"/>
    </location>
</feature>
<feature type="mutagenesis site" description="Complete loss of human ACE2 binding in vitro." evidence="6">
    <original>C</original>
    <variation>A</variation>
    <location>
        <position position="348"/>
    </location>
</feature>
<feature type="mutagenesis site" description="90% loss of human ACE2 binding in vitro." evidence="6">
    <original>E</original>
    <variation>A</variation>
    <location>
        <position position="452"/>
    </location>
</feature>
<feature type="mutagenesis site" description="Complete loss of human ACE2 binding in vitro." evidence="6">
    <original>D</original>
    <variation>A</variation>
    <location>
        <position position="454"/>
    </location>
</feature>
<feature type="mutagenesis site" description="Partial loss of human ACE2 binding in vitro." evidence="6">
    <original>D</original>
    <variation>A</variation>
    <location>
        <position position="463"/>
    </location>
</feature>
<feature type="mutagenesis site" description="Complete loss of human ACE2 binding in vitro." evidence="6">
    <original>C</original>
    <variation>A</variation>
    <location>
        <position position="467"/>
    </location>
</feature>
<feature type="mutagenesis site" description="Complete loss of human ACE2 binding in vitro." evidence="6">
    <original>C</original>
    <variation>A</variation>
    <location>
        <position position="474"/>
    </location>
</feature>
<feature type="mutagenesis site" description="No effect on human ACE2 binding in vitro." evidence="6">
    <original>D</original>
    <variation>A</variation>
    <location>
        <position position="480"/>
    </location>
</feature>
<feature type="mutagenesis site" description="40% loss of cell-cell fusion." evidence="12">
    <original>R</original>
    <variation>S</variation>
    <location>
        <position position="667"/>
    </location>
</feature>
<feature type="mutagenesis site" description="No effect on cell-cell fusion." evidence="12">
    <original>K</original>
    <variation>S</variation>
    <location>
        <position position="672"/>
    </location>
</feature>
<feature type="mutagenesis site" description="Complete loss of trypsin-induced membrane fusion." evidence="16">
    <original>R</original>
    <variation>N</variation>
    <location>
        <position position="797"/>
    </location>
</feature>
<feature type="mutagenesis site" description="Decrease in Golgi localization, and complete loss of COPI binding; when associated with A-1253." evidence="15">
    <original>K</original>
    <variation>A</variation>
    <location>
        <position position="1251"/>
    </location>
</feature>
<feature type="mutagenesis site" description="Decrease in Golgi localization, and complete loss of COPI binding; when associated with A-1251." evidence="15">
    <original>H</original>
    <variation>A</variation>
    <location>
        <position position="1253"/>
    </location>
</feature>
<feature type="strand" evidence="43">
    <location>
        <begin position="31"/>
        <end position="34"/>
    </location>
</feature>
<feature type="strand" evidence="28">
    <location>
        <begin position="37"/>
        <end position="41"/>
    </location>
</feature>
<feature type="strand" evidence="35">
    <location>
        <begin position="44"/>
        <end position="47"/>
    </location>
</feature>
<feature type="strand" evidence="43">
    <location>
        <begin position="50"/>
        <end position="59"/>
    </location>
</feature>
<feature type="strand" evidence="43">
    <location>
        <begin position="65"/>
        <end position="72"/>
    </location>
</feature>
<feature type="strand" evidence="28">
    <location>
        <begin position="73"/>
        <end position="75"/>
    </location>
</feature>
<feature type="strand" evidence="43">
    <location>
        <begin position="87"/>
        <end position="95"/>
    </location>
</feature>
<feature type="strand" evidence="43">
    <location>
        <begin position="100"/>
        <end position="108"/>
    </location>
</feature>
<feature type="strand" evidence="43">
    <location>
        <begin position="113"/>
        <end position="118"/>
    </location>
</feature>
<feature type="strand" evidence="43">
    <location>
        <begin position="123"/>
        <end position="132"/>
    </location>
</feature>
<feature type="strand" evidence="43">
    <location>
        <begin position="137"/>
        <end position="141"/>
    </location>
</feature>
<feature type="turn" evidence="43">
    <location>
        <begin position="142"/>
        <end position="144"/>
    </location>
</feature>
<feature type="strand" evidence="43">
    <location>
        <begin position="147"/>
        <end position="150"/>
    </location>
</feature>
<feature type="strand" evidence="43">
    <location>
        <begin position="152"/>
        <end position="164"/>
    </location>
</feature>
<feature type="helix" evidence="32">
    <location>
        <begin position="170"/>
        <end position="173"/>
    </location>
</feature>
<feature type="strand" evidence="43">
    <location>
        <begin position="177"/>
        <end position="190"/>
    </location>
</feature>
<feature type="strand" evidence="43">
    <location>
        <begin position="193"/>
        <end position="208"/>
    </location>
</feature>
<feature type="strand" evidence="43">
    <location>
        <begin position="215"/>
        <end position="223"/>
    </location>
</feature>
<feature type="strand" evidence="43">
    <location>
        <begin position="230"/>
        <end position="241"/>
    </location>
</feature>
<feature type="strand" evidence="43">
    <location>
        <begin position="250"/>
        <end position="256"/>
    </location>
</feature>
<feature type="strand" evidence="43">
    <location>
        <begin position="258"/>
        <end position="266"/>
    </location>
</feature>
<feature type="strand" evidence="35">
    <location>
        <begin position="268"/>
        <end position="270"/>
    </location>
</feature>
<feature type="strand" evidence="43">
    <location>
        <begin position="272"/>
        <end position="277"/>
    </location>
</feature>
<feature type="helix" evidence="43">
    <location>
        <begin position="282"/>
        <end position="290"/>
    </location>
</feature>
<feature type="strand" evidence="43">
    <location>
        <begin position="297"/>
        <end position="301"/>
    </location>
</feature>
<feature type="strand" evidence="42">
    <location>
        <begin position="305"/>
        <end position="307"/>
    </location>
</feature>
<feature type="strand" evidence="43">
    <location>
        <begin position="312"/>
        <end position="315"/>
    </location>
</feature>
<feature type="strand" evidence="41">
    <location>
        <begin position="320"/>
        <end position="322"/>
    </location>
</feature>
<feature type="helix" evidence="43">
    <location>
        <begin position="325"/>
        <end position="329"/>
    </location>
</feature>
<feature type="helix" evidence="43">
    <location>
        <begin position="337"/>
        <end position="339"/>
    </location>
</feature>
<feature type="strand" evidence="43">
    <location>
        <begin position="341"/>
        <end position="345"/>
    </location>
</feature>
<feature type="strand" evidence="43">
    <location>
        <begin position="347"/>
        <end position="349"/>
    </location>
</feature>
<feature type="helix" evidence="43">
    <location>
        <begin position="352"/>
        <end position="357"/>
    </location>
</feature>
<feature type="turn" evidence="33">
    <location>
        <begin position="358"/>
        <end position="360"/>
    </location>
</feature>
<feature type="strand" evidence="43">
    <location>
        <begin position="362"/>
        <end position="369"/>
    </location>
</feature>
<feature type="helix" evidence="43">
    <location>
        <begin position="371"/>
        <end position="376"/>
    </location>
</feature>
<feature type="strand" evidence="43">
    <location>
        <begin position="378"/>
        <end position="390"/>
    </location>
</feature>
<feature type="helix" evidence="43">
    <location>
        <begin position="391"/>
        <end position="396"/>
    </location>
</feature>
<feature type="strand" evidence="34">
    <location>
        <begin position="397"/>
        <end position="400"/>
    </location>
</feature>
<feature type="helix" evidence="43">
    <location>
        <begin position="404"/>
        <end position="408"/>
    </location>
</feature>
<feature type="strand" evidence="28">
    <location>
        <begin position="414"/>
        <end position="416"/>
    </location>
</feature>
<feature type="strand" evidence="43">
    <location>
        <begin position="418"/>
        <end position="424"/>
    </location>
</feature>
<feature type="helix" evidence="43">
    <location>
        <begin position="426"/>
        <end position="429"/>
    </location>
</feature>
<feature type="strand" evidence="43">
    <location>
        <begin position="431"/>
        <end position="433"/>
    </location>
</feature>
<feature type="strand" evidence="43">
    <location>
        <begin position="439"/>
        <end position="441"/>
    </location>
</feature>
<feature type="turn" evidence="32">
    <location>
        <begin position="450"/>
        <end position="454"/>
    </location>
</feature>
<feature type="strand" evidence="35">
    <location>
        <begin position="462"/>
        <end position="465"/>
    </location>
</feature>
<feature type="strand" evidence="31">
    <location>
        <begin position="471"/>
        <end position="473"/>
    </location>
</feature>
<feature type="strand" evidence="43">
    <location>
        <begin position="477"/>
        <end position="480"/>
    </location>
</feature>
<feature type="strand" evidence="26">
    <location>
        <begin position="483"/>
        <end position="487"/>
    </location>
</feature>
<feature type="helix" evidence="43">
    <location>
        <begin position="489"/>
        <end position="491"/>
    </location>
</feature>
<feature type="strand" evidence="43">
    <location>
        <begin position="492"/>
        <end position="500"/>
    </location>
</feature>
<feature type="strand" evidence="43">
    <location>
        <begin position="504"/>
        <end position="506"/>
    </location>
</feature>
<feature type="strand" evidence="24">
    <location>
        <begin position="509"/>
        <end position="511"/>
    </location>
</feature>
<feature type="strand" evidence="43">
    <location>
        <begin position="522"/>
        <end position="529"/>
    </location>
</feature>
<feature type="strand" evidence="43">
    <location>
        <begin position="532"/>
        <end position="540"/>
    </location>
</feature>
<feature type="strand" evidence="43">
    <location>
        <begin position="551"/>
        <end position="553"/>
    </location>
</feature>
<feature type="strand" evidence="29">
    <location>
        <begin position="555"/>
        <end position="557"/>
    </location>
</feature>
<feature type="strand" evidence="43">
    <location>
        <begin position="559"/>
        <end position="563"/>
    </location>
</feature>
<feature type="turn" evidence="43">
    <location>
        <begin position="565"/>
        <end position="567"/>
    </location>
</feature>
<feature type="strand" evidence="43">
    <location>
        <begin position="570"/>
        <end position="574"/>
    </location>
</feature>
<feature type="strand" evidence="43">
    <location>
        <begin position="581"/>
        <end position="586"/>
    </location>
</feature>
<feature type="turn" evidence="43">
    <location>
        <begin position="588"/>
        <end position="590"/>
    </location>
</feature>
<feature type="strand" evidence="43">
    <location>
        <begin position="595"/>
        <end position="598"/>
    </location>
</feature>
<feature type="helix" evidence="39">
    <location>
        <begin position="603"/>
        <end position="611"/>
    </location>
</feature>
<feature type="helix" evidence="36">
    <location>
        <begin position="612"/>
        <end position="614"/>
    </location>
</feature>
<feature type="strand" evidence="39">
    <location>
        <begin position="615"/>
        <end position="617"/>
    </location>
</feature>
<feature type="turn" evidence="37">
    <location>
        <begin position="621"/>
        <end position="623"/>
    </location>
</feature>
<feature type="strand" evidence="43">
    <location>
        <begin position="626"/>
        <end position="631"/>
    </location>
</feature>
<feature type="strand" evidence="43">
    <location>
        <begin position="634"/>
        <end position="638"/>
    </location>
</feature>
<feature type="strand" evidence="29">
    <location>
        <begin position="640"/>
        <end position="646"/>
    </location>
</feature>
<feature type="strand" evidence="43">
    <location>
        <begin position="649"/>
        <end position="653"/>
    </location>
</feature>
<feature type="strand" evidence="43">
    <location>
        <begin position="656"/>
        <end position="662"/>
    </location>
</feature>
<feature type="helix" evidence="32">
    <location>
        <begin position="665"/>
        <end position="671"/>
    </location>
</feature>
<feature type="strand" evidence="43">
    <location>
        <begin position="672"/>
        <end position="679"/>
    </location>
</feature>
<feature type="strand" evidence="43">
    <location>
        <begin position="683"/>
        <end position="685"/>
    </location>
</feature>
<feature type="strand" evidence="43">
    <location>
        <begin position="691"/>
        <end position="696"/>
    </location>
</feature>
<feature type="strand" evidence="43">
    <location>
        <begin position="699"/>
        <end position="710"/>
    </location>
</feature>
<feature type="strand" evidence="43">
    <location>
        <begin position="715"/>
        <end position="718"/>
    </location>
</feature>
<feature type="helix" evidence="43">
    <location>
        <begin position="720"/>
        <end position="725"/>
    </location>
</feature>
<feature type="helix" evidence="43">
    <location>
        <begin position="729"/>
        <end position="738"/>
    </location>
</feature>
<feature type="helix" evidence="43">
    <location>
        <begin position="742"/>
        <end position="764"/>
    </location>
</feature>
<feature type="strand" evidence="43">
    <location>
        <begin position="768"/>
        <end position="771"/>
    </location>
</feature>
<feature type="helix" evidence="27">
    <location>
        <begin position="773"/>
        <end position="777"/>
    </location>
</feature>
<feature type="turn" evidence="43">
    <location>
        <begin position="779"/>
        <end position="781"/>
    </location>
</feature>
<feature type="helix" evidence="43">
    <location>
        <begin position="785"/>
        <end position="787"/>
    </location>
</feature>
<feature type="strand" evidence="43">
    <location>
        <begin position="791"/>
        <end position="794"/>
    </location>
</feature>
<feature type="helix" evidence="43">
    <location>
        <begin position="799"/>
        <end position="806"/>
    </location>
</feature>
<feature type="strand" evidence="35">
    <location>
        <begin position="813"/>
        <end position="815"/>
    </location>
</feature>
<feature type="helix" evidence="43">
    <location>
        <begin position="819"/>
        <end position="824"/>
    </location>
</feature>
<feature type="helix" evidence="43">
    <location>
        <begin position="826"/>
        <end position="828"/>
    </location>
</feature>
<feature type="helix" evidence="43">
    <location>
        <begin position="831"/>
        <end position="837"/>
    </location>
</feature>
<feature type="strand" evidence="43">
    <location>
        <begin position="840"/>
        <end position="843"/>
    </location>
</feature>
<feature type="helix" evidence="43">
    <location>
        <begin position="849"/>
        <end position="865"/>
    </location>
</feature>
<feature type="turn" evidence="40">
    <location>
        <begin position="866"/>
        <end position="868"/>
    </location>
</feature>
<feature type="strand" evidence="43">
    <location>
        <begin position="870"/>
        <end position="874"/>
    </location>
</feature>
<feature type="helix" evidence="43">
    <location>
        <begin position="880"/>
        <end position="890"/>
    </location>
</feature>
<feature type="strand" evidence="23">
    <location>
        <begin position="898"/>
        <end position="900"/>
    </location>
</feature>
<feature type="helix" evidence="43">
    <location>
        <begin position="902"/>
        <end position="921"/>
    </location>
</feature>
<feature type="strand" evidence="30">
    <location>
        <begin position="924"/>
        <end position="926"/>
    </location>
</feature>
<feature type="helix" evidence="21">
    <location>
        <begin position="927"/>
        <end position="962"/>
    </location>
</feature>
<feature type="strand" evidence="38">
    <location>
        <begin position="963"/>
        <end position="966"/>
    </location>
</feature>
<feature type="helix" evidence="43">
    <location>
        <begin position="968"/>
        <end position="1014"/>
    </location>
</feature>
<feature type="turn" evidence="43">
    <location>
        <begin position="1022"/>
        <end position="1024"/>
    </location>
</feature>
<feature type="strand" evidence="43">
    <location>
        <begin position="1025"/>
        <end position="1038"/>
    </location>
</feature>
<feature type="strand" evidence="43">
    <location>
        <begin position="1041"/>
        <end position="1052"/>
    </location>
</feature>
<feature type="strand" evidence="43">
    <location>
        <begin position="1055"/>
        <end position="1058"/>
    </location>
</feature>
<feature type="strand" evidence="43">
    <location>
        <begin position="1063"/>
        <end position="1065"/>
    </location>
</feature>
<feature type="strand" evidence="43">
    <location>
        <begin position="1068"/>
        <end position="1079"/>
    </location>
</feature>
<feature type="strand" evidence="43">
    <location>
        <begin position="1081"/>
        <end position="1087"/>
    </location>
</feature>
<feature type="strand" evidence="43">
    <location>
        <begin position="1089"/>
        <end position="1091"/>
    </location>
</feature>
<feature type="helix" evidence="43">
    <location>
        <begin position="1099"/>
        <end position="1101"/>
    </location>
</feature>
<feature type="strand" evidence="43">
    <location>
        <begin position="1102"/>
        <end position="1104"/>
    </location>
</feature>
<feature type="strand" evidence="43">
    <location>
        <begin position="1108"/>
        <end position="1111"/>
    </location>
</feature>
<feature type="strand" evidence="29">
    <location>
        <begin position="1114"/>
        <end position="1116"/>
    </location>
</feature>
<feature type="helix" evidence="41">
    <location>
        <begin position="1123"/>
        <end position="1131"/>
    </location>
</feature>
<feature type="helix" evidence="25">
    <location>
        <begin position="1148"/>
        <end position="1151"/>
    </location>
</feature>
<feature type="helix" evidence="21">
    <location>
        <begin position="1154"/>
        <end position="1180"/>
    </location>
</feature>
<feature type="helix" evidence="22">
    <location>
        <begin position="1182"/>
        <end position="1192"/>
    </location>
</feature>
<proteinExistence type="evidence at protein level"/>
<dbReference type="EMBL" id="AY278741">
    <property type="protein sequence ID" value="AAP13441.1"/>
    <property type="molecule type" value="Genomic_RNA"/>
</dbReference>
<dbReference type="EMBL" id="AY274119">
    <property type="protein sequence ID" value="AAP41037.1"/>
    <property type="molecule type" value="Genomic_RNA"/>
</dbReference>
<dbReference type="EMBL" id="AY282752">
    <property type="protein sequence ID" value="AAP30713.1"/>
    <property type="molecule type" value="Genomic_RNA"/>
</dbReference>
<dbReference type="EMBL" id="AY278554">
    <property type="protein sequence ID" value="AAP13567.1"/>
    <property type="molecule type" value="Genomic_RNA"/>
</dbReference>
<dbReference type="EMBL" id="AY278491">
    <property type="status" value="NOT_ANNOTATED_CDS"/>
    <property type="molecule type" value="Genomic_RNA"/>
</dbReference>
<dbReference type="EMBL" id="AY304495">
    <property type="status" value="NOT_ANNOTATED_CDS"/>
    <property type="molecule type" value="Genomic_RNA"/>
</dbReference>
<dbReference type="EMBL" id="AY304492">
    <property type="status" value="NOT_ANNOTATED_CDS"/>
    <property type="molecule type" value="Genomic_RNA"/>
</dbReference>
<dbReference type="EMBL" id="AY278487">
    <property type="status" value="NOT_ANNOTATED_CDS"/>
    <property type="molecule type" value="Genomic_RNA"/>
</dbReference>
<dbReference type="EMBL" id="AY278488">
    <property type="protein sequence ID" value="AAP30030.1"/>
    <property type="molecule type" value="Genomic_RNA"/>
</dbReference>
<dbReference type="EMBL" id="AY278490">
    <property type="status" value="NOT_ANNOTATED_CDS"/>
    <property type="molecule type" value="Genomic_RNA"/>
</dbReference>
<dbReference type="EMBL" id="AY279354">
    <property type="status" value="NOT_ANNOTATED_CDS"/>
    <property type="molecule type" value="Genomic_RNA"/>
</dbReference>
<dbReference type="EMBL" id="AY278489">
    <property type="protein sequence ID" value="AAP51227.1"/>
    <property type="molecule type" value="Genomic_RNA"/>
</dbReference>
<dbReference type="EMBL" id="AY283794">
    <property type="status" value="NOT_ANNOTATED_CDS"/>
    <property type="molecule type" value="Genomic_RNA"/>
</dbReference>
<dbReference type="EMBL" id="AY283795">
    <property type="status" value="NOT_ANNOTATED_CDS"/>
    <property type="molecule type" value="Genomic_RNA"/>
</dbReference>
<dbReference type="EMBL" id="AY283796">
    <property type="status" value="NOT_ANNOTATED_CDS"/>
    <property type="molecule type" value="Genomic_RNA"/>
</dbReference>
<dbReference type="EMBL" id="AY283797">
    <property type="status" value="NOT_ANNOTATED_CDS"/>
    <property type="molecule type" value="Genomic_RNA"/>
</dbReference>
<dbReference type="EMBL" id="AY283798">
    <property type="status" value="NOT_ANNOTATED_CDS"/>
    <property type="molecule type" value="Genomic_RNA"/>
</dbReference>
<dbReference type="EMBL" id="AY291451">
    <property type="protein sequence ID" value="AAP37017.1"/>
    <property type="molecule type" value="Genomic_RNA"/>
</dbReference>
<dbReference type="EMBL" id="AY310120">
    <property type="protein sequence ID" value="AAP50485.1"/>
    <property type="molecule type" value="Genomic_RNA"/>
</dbReference>
<dbReference type="EMBL" id="AY291315">
    <property type="protein sequence ID" value="AAP33697.1"/>
    <property type="molecule type" value="Genomic_RNA"/>
</dbReference>
<dbReference type="EMBL" id="AY304486">
    <property type="status" value="NOT_ANNOTATED_CDS"/>
    <property type="molecule type" value="Genomic_RNA"/>
</dbReference>
<dbReference type="EMBL" id="AY321118">
    <property type="status" value="NOT_ANNOTATED_CDS"/>
    <property type="molecule type" value="Genomic_RNA"/>
</dbReference>
<dbReference type="EMBL" id="AY323976">
    <property type="protein sequence ID" value="AAP73417.1"/>
    <property type="molecule type" value="mRNA"/>
</dbReference>
<dbReference type="EMBL" id="AH012999">
    <property type="protein sequence ID" value="AAP82968.1"/>
    <property type="molecule type" value="Genomic_RNA"/>
</dbReference>
<dbReference type="EMBL" id="AY338174">
    <property type="protein sequence ID" value="AAQ01597.1"/>
    <property type="molecule type" value="Genomic_RNA"/>
</dbReference>
<dbReference type="EMBL" id="AY338175">
    <property type="protein sequence ID" value="AAQ01609.1"/>
    <property type="molecule type" value="Genomic_RNA"/>
</dbReference>
<dbReference type="EMBL" id="AY348314">
    <property type="protein sequence ID" value="AAP97882.1"/>
    <property type="molecule type" value="Genomic_RNA"/>
</dbReference>
<dbReference type="EMBL" id="AP006557">
    <property type="protein sequence ID" value="BAC81348.1"/>
    <property type="molecule type" value="Genomic_RNA"/>
</dbReference>
<dbReference type="EMBL" id="AP006558">
    <property type="protein sequence ID" value="BAC81362.1"/>
    <property type="molecule type" value="Genomic_RNA"/>
</dbReference>
<dbReference type="EMBL" id="AP006559">
    <property type="protein sequence ID" value="BAC81376.1"/>
    <property type="molecule type" value="Genomic_RNA"/>
</dbReference>
<dbReference type="EMBL" id="AP006560">
    <property type="protein sequence ID" value="BAC81390.1"/>
    <property type="molecule type" value="Genomic_RNA"/>
</dbReference>
<dbReference type="EMBL" id="AP006561">
    <property type="protein sequence ID" value="BAC81404.1"/>
    <property type="molecule type" value="Genomic_RNA"/>
</dbReference>
<dbReference type="EMBL" id="AY323977">
    <property type="protein sequence ID" value="AAP72986.1"/>
    <property type="molecule type" value="Genomic_RNA"/>
</dbReference>
<dbReference type="EMBL" id="AY362698">
    <property type="status" value="NOT_ANNOTATED_CDS"/>
    <property type="molecule type" value="Genomic_RNA"/>
</dbReference>
<dbReference type="EMBL" id="AY362699">
    <property type="status" value="NOT_ANNOTATED_CDS"/>
    <property type="molecule type" value="Genomic_RNA"/>
</dbReference>
<dbReference type="EMBL" id="AY427439">
    <property type="protein sequence ID" value="AAQ94060.1"/>
    <property type="molecule type" value="Genomic_RNA"/>
</dbReference>
<dbReference type="EMBL" id="AY463059">
    <property type="protein sequence ID" value="AAR86788.1"/>
    <property type="molecule type" value="Genomic_RNA"/>
</dbReference>
<dbReference type="EMBL" id="AY525636">
    <property type="protein sequence ID" value="AAS10463.1"/>
    <property type="molecule type" value="Genomic_RNA"/>
</dbReference>
<dbReference type="PDB" id="1WNC">
    <property type="method" value="X-ray"/>
    <property type="resolution" value="2.80 A"/>
    <property type="chains" value="A/B/C/D/E/F=900-948, A/B/C/D/E/F=1144-1185"/>
</dbReference>
<dbReference type="PDB" id="1WYY">
    <property type="method" value="X-ray"/>
    <property type="resolution" value="2.20 A"/>
    <property type="chains" value="A/B=885-981, A/B=1145-1189"/>
</dbReference>
<dbReference type="PDB" id="1ZV7">
    <property type="method" value="X-ray"/>
    <property type="resolution" value="1.70 A"/>
    <property type="chains" value="A/B=1150-1193"/>
</dbReference>
<dbReference type="PDB" id="1ZV8">
    <property type="method" value="X-ray"/>
    <property type="resolution" value="1.94 A"/>
    <property type="chains" value="A/C/E/G/I/K=901-950, B/D/F/H/J/L=1150-1185"/>
</dbReference>
<dbReference type="PDB" id="1ZVA">
    <property type="method" value="X-ray"/>
    <property type="resolution" value="1.50 A"/>
    <property type="chains" value="A=926-962"/>
</dbReference>
<dbReference type="PDB" id="1ZVB">
    <property type="method" value="X-ray"/>
    <property type="resolution" value="1.70 A"/>
    <property type="chains" value="A/B/C=940-973"/>
</dbReference>
<dbReference type="PDB" id="2AJF">
    <property type="method" value="X-ray"/>
    <property type="resolution" value="2.90 A"/>
    <property type="chains" value="E/F=323-502"/>
</dbReference>
<dbReference type="PDB" id="2BEQ">
    <property type="method" value="X-ray"/>
    <property type="resolution" value="1.60 A"/>
    <property type="chains" value="A/B/C=914-949, D/E/F=1148-1193"/>
</dbReference>
<dbReference type="PDB" id="2BEZ">
    <property type="method" value="X-ray"/>
    <property type="resolution" value="1.60 A"/>
    <property type="chains" value="C=896-972, F=1142-1183"/>
</dbReference>
<dbReference type="PDB" id="2DD8">
    <property type="method" value="X-ray"/>
    <property type="resolution" value="2.30 A"/>
    <property type="chains" value="S=317-518"/>
</dbReference>
<dbReference type="PDB" id="2FXP">
    <property type="method" value="NMR"/>
    <property type="chains" value="A/B/C=1141-1193"/>
</dbReference>
<dbReference type="PDB" id="2GHV">
    <property type="method" value="X-ray"/>
    <property type="resolution" value="2.20 A"/>
    <property type="chains" value="C/E=317-510"/>
</dbReference>
<dbReference type="PDB" id="2GHW">
    <property type="method" value="X-ray"/>
    <property type="resolution" value="2.30 A"/>
    <property type="chains" value="A/C=317-510"/>
</dbReference>
<dbReference type="PDB" id="2RUM">
    <property type="method" value="NMR"/>
    <property type="chains" value="A=770-788"/>
</dbReference>
<dbReference type="PDB" id="2RUN">
    <property type="method" value="NMR"/>
    <property type="chains" value="A=1185-1202"/>
</dbReference>
<dbReference type="PDB" id="2RUO">
    <property type="method" value="NMR"/>
    <property type="chains" value="A=873-888"/>
</dbReference>
<dbReference type="PDB" id="3BGF">
    <property type="method" value="X-ray"/>
    <property type="resolution" value="3.00 A"/>
    <property type="chains" value="A/S=318-510"/>
</dbReference>
<dbReference type="PDB" id="3D0G">
    <property type="method" value="X-ray"/>
    <property type="resolution" value="2.80 A"/>
    <property type="chains" value="E/F=324-502"/>
</dbReference>
<dbReference type="PDB" id="3D0H">
    <property type="method" value="X-ray"/>
    <property type="resolution" value="3.10 A"/>
    <property type="chains" value="E/F=324-502"/>
</dbReference>
<dbReference type="PDB" id="3D0I">
    <property type="method" value="X-ray"/>
    <property type="resolution" value="2.90 A"/>
    <property type="chains" value="E/F=324-502"/>
</dbReference>
<dbReference type="PDB" id="3SCI">
    <property type="method" value="X-ray"/>
    <property type="resolution" value="2.90 A"/>
    <property type="chains" value="E/F=306-527"/>
</dbReference>
<dbReference type="PDB" id="3SCJ">
    <property type="method" value="X-ray"/>
    <property type="resolution" value="3.00 A"/>
    <property type="chains" value="E/F=323-502"/>
</dbReference>
<dbReference type="PDB" id="3SCK">
    <property type="method" value="X-ray"/>
    <property type="resolution" value="3.00 A"/>
    <property type="chains" value="E/F=324-502"/>
</dbReference>
<dbReference type="PDB" id="3SCL">
    <property type="method" value="X-ray"/>
    <property type="resolution" value="3.00 A"/>
    <property type="chains" value="E/F=324-502"/>
</dbReference>
<dbReference type="PDB" id="5WRG">
    <property type="method" value="EM"/>
    <property type="resolution" value="4.30 A"/>
    <property type="chains" value="A/B/C=1-1196"/>
</dbReference>
<dbReference type="PDB" id="5X4S">
    <property type="method" value="X-ray"/>
    <property type="resolution" value="2.20 A"/>
    <property type="chains" value="A=14-292"/>
</dbReference>
<dbReference type="PDB" id="5X58">
    <property type="method" value="EM"/>
    <property type="resolution" value="3.20 A"/>
    <property type="chains" value="A/B/C=14-1193"/>
</dbReference>
<dbReference type="PDB" id="5X5B">
    <property type="method" value="EM"/>
    <property type="resolution" value="3.70 A"/>
    <property type="chains" value="A/B/C=14-1193"/>
</dbReference>
<dbReference type="PDB" id="5XJK">
    <property type="method" value="NMR"/>
    <property type="chains" value="A=758-821"/>
</dbReference>
<dbReference type="PDB" id="5XLR">
    <property type="method" value="EM"/>
    <property type="resolution" value="3.80 A"/>
    <property type="chains" value="A/B/C=1-1196"/>
</dbReference>
<dbReference type="PDB" id="5ZVM">
    <property type="method" value="X-ray"/>
    <property type="resolution" value="3.30 A"/>
    <property type="chains" value="A/B/C=892-970"/>
</dbReference>
<dbReference type="PDB" id="6ACC">
    <property type="method" value="EM"/>
    <property type="resolution" value="3.60 A"/>
    <property type="chains" value="A/B/C=1-1196"/>
</dbReference>
<dbReference type="PDB" id="6ACD">
    <property type="method" value="EM"/>
    <property type="resolution" value="3.90 A"/>
    <property type="chains" value="A/B/C=1-1196"/>
</dbReference>
<dbReference type="PDB" id="6ACG">
    <property type="method" value="EM"/>
    <property type="resolution" value="5.40 A"/>
    <property type="chains" value="A/B/C=1-1196"/>
</dbReference>
<dbReference type="PDB" id="6ACJ">
    <property type="method" value="EM"/>
    <property type="resolution" value="4.20 A"/>
    <property type="chains" value="A/B/C=1-1196"/>
</dbReference>
<dbReference type="PDB" id="6ACK">
    <property type="method" value="EM"/>
    <property type="resolution" value="4.50 A"/>
    <property type="chains" value="A/B/C=1-1196"/>
</dbReference>
<dbReference type="PDB" id="6CRV">
    <property type="method" value="EM"/>
    <property type="resolution" value="3.20 A"/>
    <property type="chains" value="A/B/C=14-1190"/>
</dbReference>
<dbReference type="PDB" id="6CRW">
    <property type="method" value="EM"/>
    <property type="resolution" value="3.90 A"/>
    <property type="chains" value="A/B/C=14-1190"/>
</dbReference>
<dbReference type="PDB" id="6CRX">
    <property type="method" value="EM"/>
    <property type="resolution" value="3.90 A"/>
    <property type="chains" value="A/B/C=14-1190"/>
</dbReference>
<dbReference type="PDB" id="6CRZ">
    <property type="method" value="EM"/>
    <property type="resolution" value="3.30 A"/>
    <property type="chains" value="A/B/C=14-1190"/>
</dbReference>
<dbReference type="PDB" id="6CS0">
    <property type="method" value="EM"/>
    <property type="resolution" value="3.80 A"/>
    <property type="chains" value="A/B/C=14-1190"/>
</dbReference>
<dbReference type="PDB" id="6CS1">
    <property type="method" value="EM"/>
    <property type="resolution" value="4.60 A"/>
    <property type="chains" value="A/B/C=14-1190"/>
</dbReference>
<dbReference type="PDB" id="6CS2">
    <property type="method" value="EM"/>
    <property type="resolution" value="4.40 A"/>
    <property type="chains" value="A/B/C=14-1190"/>
</dbReference>
<dbReference type="PDB" id="6M3W">
    <property type="method" value="EM"/>
    <property type="resolution" value="3.90 A"/>
    <property type="chains" value="A/B/C=688-1178"/>
</dbReference>
<dbReference type="PDB" id="6NB6">
    <property type="method" value="EM"/>
    <property type="resolution" value="4.20 A"/>
    <property type="chains" value="A/B/C=14-1193"/>
</dbReference>
<dbReference type="PDB" id="6NB7">
    <property type="method" value="EM"/>
    <property type="resolution" value="4.50 A"/>
    <property type="chains" value="A/B/C=14-1193"/>
</dbReference>
<dbReference type="PDB" id="6VW1">
    <property type="method" value="X-ray"/>
    <property type="resolution" value="2.68 A"/>
    <property type="chains" value="E/F=306-441, E/F=505-521"/>
</dbReference>
<dbReference type="PDB" id="6WAQ">
    <property type="method" value="X-ray"/>
    <property type="resolution" value="2.20 A"/>
    <property type="chains" value="B/D=320-502"/>
</dbReference>
<dbReference type="PDB" id="7AKJ">
    <property type="method" value="EM"/>
    <property type="resolution" value="3.80 A"/>
    <property type="chains" value="A/B/C=18-1160"/>
</dbReference>
<dbReference type="PDB" id="7FC6">
    <property type="method" value="X-ray"/>
    <property type="resolution" value="2.65 A"/>
    <property type="chains" value="S=321-512"/>
</dbReference>
<dbReference type="PDB" id="7JN5">
    <property type="method" value="X-ray"/>
    <property type="resolution" value="2.71 A"/>
    <property type="chains" value="F=306-527"/>
</dbReference>
<dbReference type="PDB" id="7RKS">
    <property type="method" value="X-ray"/>
    <property type="resolution" value="2.70 A"/>
    <property type="chains" value="R/S=321-510"/>
</dbReference>
<dbReference type="PDB" id="7SG4">
    <property type="method" value="EM"/>
    <property type="resolution" value="3.43 A"/>
    <property type="chains" value="A/B/C=1-1190"/>
</dbReference>
<dbReference type="PDB" id="7WR9">
    <property type="method" value="EM"/>
    <property type="resolution" value="3.24 A"/>
    <property type="chains" value="F=323-502"/>
</dbReference>
<dbReference type="PDB" id="7WSF">
    <property type="method" value="EM"/>
    <property type="resolution" value="2.87 A"/>
    <property type="chains" value="B=321-502"/>
</dbReference>
<dbReference type="PDB" id="7WSG">
    <property type="method" value="EM"/>
    <property type="resolution" value="3.03 A"/>
    <property type="chains" value="B=321-502"/>
</dbReference>
<dbReference type="PDB" id="7X2J">
    <property type="method" value="X-ray"/>
    <property type="resolution" value="2.40 A"/>
    <property type="chains" value="S=306-516"/>
</dbReference>
<dbReference type="PDB" id="7X7V">
    <property type="method" value="EM"/>
    <property type="resolution" value="3.83 A"/>
    <property type="chains" value="E=320-508"/>
</dbReference>
<dbReference type="PDB" id="7Y3N">
    <property type="method" value="X-ray"/>
    <property type="resolution" value="2.97 A"/>
    <property type="chains" value="A/B/E=306-527"/>
</dbReference>
<dbReference type="PDB" id="7ZH1">
    <property type="method" value="EM"/>
    <property type="resolution" value="2.48 A"/>
    <property type="chains" value="A/B/C=14-1193"/>
</dbReference>
<dbReference type="PDB" id="7ZH2">
    <property type="method" value="EM"/>
    <property type="resolution" value="2.71 A"/>
    <property type="chains" value="A/B/C=14-1193"/>
</dbReference>
<dbReference type="PDB" id="7ZH5">
    <property type="method" value="EM"/>
    <property type="resolution" value="3.30 A"/>
    <property type="chains" value="A/B/C=14-1193"/>
</dbReference>
<dbReference type="PDB" id="8H0X">
    <property type="method" value="EM"/>
    <property type="resolution" value="2.57 A"/>
    <property type="chains" value="A/B/C=15-1193"/>
</dbReference>
<dbReference type="PDB" id="8H0Y">
    <property type="method" value="EM"/>
    <property type="resolution" value="2.85 A"/>
    <property type="chains" value="A/B/C=15-1193"/>
</dbReference>
<dbReference type="PDB" id="8H0Z">
    <property type="method" value="EM"/>
    <property type="resolution" value="2.99 A"/>
    <property type="chains" value="A/B/C=15-1193"/>
</dbReference>
<dbReference type="PDB" id="8H10">
    <property type="method" value="EM"/>
    <property type="resolution" value="2.99 A"/>
    <property type="chains" value="A/B/C=15-1193"/>
</dbReference>
<dbReference type="PDB" id="8H11">
    <property type="method" value="EM"/>
    <property type="resolution" value="2.72 A"/>
    <property type="chains" value="A/B/C=15-1193"/>
</dbReference>
<dbReference type="PDB" id="8H12">
    <property type="method" value="EM"/>
    <property type="resolution" value="3.45 A"/>
    <property type="chains" value="A/B/C=15-1193"/>
</dbReference>
<dbReference type="PDB" id="8H13">
    <property type="method" value="EM"/>
    <property type="resolution" value="4.05 A"/>
    <property type="chains" value="A/B/C=15-1193"/>
</dbReference>
<dbReference type="PDB" id="8H14">
    <property type="method" value="EM"/>
    <property type="resolution" value="3.39 A"/>
    <property type="chains" value="A/B/C=15-1193"/>
</dbReference>
<dbReference type="PDB" id="8H15">
    <property type="method" value="EM"/>
    <property type="resolution" value="3.14 A"/>
    <property type="chains" value="A/B/C=15-1193"/>
</dbReference>
<dbReference type="PDB" id="8H16">
    <property type="method" value="EM"/>
    <property type="resolution" value="3.36 A"/>
    <property type="chains" value="A/B/C=15-1193"/>
</dbReference>
<dbReference type="PDB" id="8JAG">
    <property type="method" value="EM"/>
    <property type="resolution" value="3.55 A"/>
    <property type="chains" value="A=1-1255"/>
</dbReference>
<dbReference type="PDB" id="8KDM">
    <property type="method" value="EM"/>
    <property type="resolution" value="2.87 A"/>
    <property type="chains" value="A/B/C=1-1190"/>
</dbReference>
<dbReference type="PDB" id="8KDS">
    <property type="method" value="EM"/>
    <property type="resolution" value="3.05 A"/>
    <property type="chains" value="A/B/C=1-1190"/>
</dbReference>
<dbReference type="PDB" id="8KDT">
    <property type="method" value="EM"/>
    <property type="resolution" value="3.04 A"/>
    <property type="chains" value="A=1-1190"/>
</dbReference>
<dbReference type="PDB" id="8KEK">
    <property type="method" value="EM"/>
    <property type="resolution" value="3.54 A"/>
    <property type="chains" value="A=1-1190"/>
</dbReference>
<dbReference type="PDB" id="8SPH">
    <property type="method" value="X-ray"/>
    <property type="resolution" value="2.71 A"/>
    <property type="chains" value="E/F=306-521"/>
</dbReference>
<dbReference type="PDB" id="8SPI">
    <property type="method" value="X-ray"/>
    <property type="resolution" value="3.06 A"/>
    <property type="chains" value="E/F=306-521"/>
</dbReference>
<dbReference type="PDB" id="8TC5">
    <property type="method" value="EM"/>
    <property type="resolution" value="2.11 A"/>
    <property type="chains" value="A/B/C=16-1121"/>
</dbReference>
<dbReference type="PDB" id="8WCG">
    <property type="method" value="X-ray"/>
    <property type="resolution" value="2.60 A"/>
    <property type="chains" value="A/B=320-516"/>
</dbReference>
<dbReference type="PDB" id="8WOZ">
    <property type="method" value="EM"/>
    <property type="resolution" value="3.25 A"/>
    <property type="chains" value="B=306-527"/>
</dbReference>
<dbReference type="PDB" id="8XZB">
    <property type="method" value="EM"/>
    <property type="resolution" value="3.12 A"/>
    <property type="chains" value="C=306-527"/>
</dbReference>
<dbReference type="PDBsum" id="1WNC"/>
<dbReference type="PDBsum" id="1WYY"/>
<dbReference type="PDBsum" id="1ZV7"/>
<dbReference type="PDBsum" id="1ZV8"/>
<dbReference type="PDBsum" id="1ZVA"/>
<dbReference type="PDBsum" id="1ZVB"/>
<dbReference type="PDBsum" id="2AJF"/>
<dbReference type="PDBsum" id="2BEQ"/>
<dbReference type="PDBsum" id="2BEZ"/>
<dbReference type="PDBsum" id="2DD8"/>
<dbReference type="PDBsum" id="2FXP"/>
<dbReference type="PDBsum" id="2GHV"/>
<dbReference type="PDBsum" id="2GHW"/>
<dbReference type="PDBsum" id="2RUM"/>
<dbReference type="PDBsum" id="2RUN"/>
<dbReference type="PDBsum" id="2RUO"/>
<dbReference type="PDBsum" id="3BGF"/>
<dbReference type="PDBsum" id="3D0G"/>
<dbReference type="PDBsum" id="3D0H"/>
<dbReference type="PDBsum" id="3D0I"/>
<dbReference type="PDBsum" id="3SCI"/>
<dbReference type="PDBsum" id="3SCJ"/>
<dbReference type="PDBsum" id="3SCK"/>
<dbReference type="PDBsum" id="3SCL"/>
<dbReference type="PDBsum" id="5WRG"/>
<dbReference type="PDBsum" id="5X4S"/>
<dbReference type="PDBsum" id="5X58"/>
<dbReference type="PDBsum" id="5X5B"/>
<dbReference type="PDBsum" id="5XJK"/>
<dbReference type="PDBsum" id="5XLR"/>
<dbReference type="PDBsum" id="5ZVM"/>
<dbReference type="PDBsum" id="6ACC"/>
<dbReference type="PDBsum" id="6ACD"/>
<dbReference type="PDBsum" id="6ACG"/>
<dbReference type="PDBsum" id="6ACJ"/>
<dbReference type="PDBsum" id="6ACK"/>
<dbReference type="PDBsum" id="6CRV"/>
<dbReference type="PDBsum" id="6CRW"/>
<dbReference type="PDBsum" id="6CRX"/>
<dbReference type="PDBsum" id="6CRZ"/>
<dbReference type="PDBsum" id="6CS0"/>
<dbReference type="PDBsum" id="6CS1"/>
<dbReference type="PDBsum" id="6CS2"/>
<dbReference type="PDBsum" id="6M3W"/>
<dbReference type="PDBsum" id="6NB6"/>
<dbReference type="PDBsum" id="6NB7"/>
<dbReference type="PDBsum" id="6VW1"/>
<dbReference type="PDBsum" id="6WAQ"/>
<dbReference type="PDBsum" id="7AKJ"/>
<dbReference type="PDBsum" id="7FC6"/>
<dbReference type="PDBsum" id="7JN5"/>
<dbReference type="PDBsum" id="7RKS"/>
<dbReference type="PDBsum" id="7SG4"/>
<dbReference type="PDBsum" id="7WR9"/>
<dbReference type="PDBsum" id="7WSF"/>
<dbReference type="PDBsum" id="7WSG"/>
<dbReference type="PDBsum" id="7X2J"/>
<dbReference type="PDBsum" id="7X7V"/>
<dbReference type="PDBsum" id="7Y3N"/>
<dbReference type="PDBsum" id="7ZH1"/>
<dbReference type="PDBsum" id="7ZH2"/>
<dbReference type="PDBsum" id="7ZH5"/>
<dbReference type="PDBsum" id="8H0X"/>
<dbReference type="PDBsum" id="8H0Y"/>
<dbReference type="PDBsum" id="8H0Z"/>
<dbReference type="PDBsum" id="8H10"/>
<dbReference type="PDBsum" id="8H11"/>
<dbReference type="PDBsum" id="8H12"/>
<dbReference type="PDBsum" id="8H13"/>
<dbReference type="PDBsum" id="8H14"/>
<dbReference type="PDBsum" id="8H15"/>
<dbReference type="PDBsum" id="8H16"/>
<dbReference type="PDBsum" id="8JAG"/>
<dbReference type="PDBsum" id="8KDM"/>
<dbReference type="PDBsum" id="8KDS"/>
<dbReference type="PDBsum" id="8KDT"/>
<dbReference type="PDBsum" id="8KEK"/>
<dbReference type="PDBsum" id="8SPH"/>
<dbReference type="PDBsum" id="8SPI"/>
<dbReference type="PDBsum" id="8TC5"/>
<dbReference type="PDBsum" id="8WCG"/>
<dbReference type="PDBsum" id="8WOZ"/>
<dbReference type="PDBsum" id="8XZB"/>
<dbReference type="BMRB" id="P59594"/>
<dbReference type="EMDB" id="EMD-0403"/>
<dbReference type="EMDB" id="EMD-0404"/>
<dbReference type="EMDB" id="EMD-11953"/>
<dbReference type="EMDB" id="EMD-11954"/>
<dbReference type="EMDB" id="EMD-13917"/>
<dbReference type="EMDB" id="EMD-13918"/>
<dbReference type="EMDB" id="EMD-13920"/>
<dbReference type="EMDB" id="EMD-14810"/>
<dbReference type="EMDB" id="EMD-14811"/>
<dbReference type="EMDB" id="EMD-22861"/>
<dbReference type="EMDB" id="EMD-22862"/>
<dbReference type="EMDB" id="EMD-22863"/>
<dbReference type="EMDB" id="EMD-22864"/>
<dbReference type="EMDB" id="EMD-25105"/>
<dbReference type="EMDB" id="EMD-30072"/>
<dbReference type="EMDB" id="EMD-32719"/>
<dbReference type="EMDB" id="EMD-32756"/>
<dbReference type="EMDB" id="EMD-32757"/>
<dbReference type="EMDB" id="EMD-33049"/>
<dbReference type="EMDB" id="EMD-34417"/>
<dbReference type="EMDB" id="EMD-34418"/>
<dbReference type="EMDB" id="EMD-34419"/>
<dbReference type="EMDB" id="EMD-34420"/>
<dbReference type="EMDB" id="EMD-34421"/>
<dbReference type="EMDB" id="EMD-34422"/>
<dbReference type="EMDB" id="EMD-34423"/>
<dbReference type="EMDB" id="EMD-34424"/>
<dbReference type="EMDB" id="EMD-34425"/>
<dbReference type="EMDB" id="EMD-34426"/>
<dbReference type="EMDB" id="EMD-36892"/>
<dbReference type="EMDB" id="EMD-37139"/>
<dbReference type="EMDB" id="EMD-37144"/>
<dbReference type="EMDB" id="EMD-37145"/>
<dbReference type="EMDB" id="EMD-37161"/>
<dbReference type="EMDB" id="EMD-37703"/>
<dbReference type="EMDB" id="EMD-38792"/>
<dbReference type="EMDB" id="EMD-41152"/>
<dbReference type="EMDB" id="EMD-6703"/>
<dbReference type="EMDB" id="EMD-6705"/>
<dbReference type="EMDB" id="EMD-6732"/>
<dbReference type="EMDB" id="EMD-9588"/>
<dbReference type="EMDB" id="EMD-9589"/>
<dbReference type="EMDB" id="EMD-9591"/>
<dbReference type="EMDB" id="EMD-9593"/>
<dbReference type="EMDB" id="EMD-9594"/>
<dbReference type="SMR" id="P59594"/>
<dbReference type="BioGRID" id="4383915">
    <property type="interactions" value="244"/>
</dbReference>
<dbReference type="ComplexPortal" id="CPX-5694">
    <property type="entry name" value="SARS-CoV cleaved Spike protein complex"/>
</dbReference>
<dbReference type="ComplexPortal" id="CPX-7088">
    <property type="entry name" value="SARS-CoV uncleaved Spike protein complex"/>
</dbReference>
<dbReference type="DIP" id="DIP-29105N"/>
<dbReference type="IntAct" id="P59594">
    <property type="interactions" value="27"/>
</dbReference>
<dbReference type="BindingDB" id="P59594"/>
<dbReference type="ChEMBL" id="CHEMBL4802007"/>
<dbReference type="DrugCentral" id="P59594"/>
<dbReference type="GlyConnect" id="3006">
    <property type="glycosylation" value="8 N-Linked glycans"/>
</dbReference>
<dbReference type="GlyCosmos" id="P59594">
    <property type="glycosylation" value="23 sites, No reported glycans"/>
</dbReference>
<dbReference type="GlyGen" id="P59594">
    <property type="glycosylation" value="25 sites, 8 N-linked glycans (13 sites), 7 N-linked;o-linked glycans (20 sites)"/>
</dbReference>
<dbReference type="iPTMnet" id="P59594"/>
<dbReference type="SwissPalm" id="P59594"/>
<dbReference type="ABCD" id="P59594">
    <property type="antibodies" value="137 sequenced antibodies"/>
</dbReference>
<dbReference type="DNASU" id="1489668"/>
<dbReference type="Reactome" id="R-HSA-9678110">
    <property type="pathway name" value="Attachment and Entry"/>
</dbReference>
<dbReference type="Reactome" id="R-HSA-9679509">
    <property type="pathway name" value="Virion Assembly and Release"/>
</dbReference>
<dbReference type="Reactome" id="R-HSA-9683686">
    <property type="pathway name" value="Maturation of spike protein"/>
</dbReference>
<dbReference type="Reactome" id="R-HSA-9683701">
    <property type="pathway name" value="Translation of Structural Proteins"/>
</dbReference>
<dbReference type="Reactome" id="R-HSA-9692916">
    <property type="pathway name" value="SARS-CoV-1 activates/modulates innate immune responses"/>
</dbReference>
<dbReference type="SABIO-RK" id="P59594"/>
<dbReference type="SIGNOR" id="P59594"/>
<dbReference type="EvolutionaryTrace" id="P59594"/>
<dbReference type="Proteomes" id="UP000000354">
    <property type="component" value="Segment"/>
</dbReference>
<dbReference type="Proteomes" id="UP000103670">
    <property type="component" value="Segment"/>
</dbReference>
<dbReference type="Proteomes" id="UP000109640">
    <property type="component" value="Segment"/>
</dbReference>
<dbReference type="Proteomes" id="UP000116947">
    <property type="component" value="Segment"/>
</dbReference>
<dbReference type="Proteomes" id="UP000121636">
    <property type="component" value="Segment"/>
</dbReference>
<dbReference type="Proteomes" id="UP000131569">
    <property type="component" value="Segment"/>
</dbReference>
<dbReference type="Proteomes" id="UP000131955">
    <property type="component" value="Segment"/>
</dbReference>
<dbReference type="Proteomes" id="UP000137377">
    <property type="component" value="Genome"/>
</dbReference>
<dbReference type="Proteomes" id="UP000138690">
    <property type="component" value="Segment"/>
</dbReference>
<dbReference type="Proteomes" id="UP000143093">
    <property type="component" value="Segment"/>
</dbReference>
<dbReference type="Proteomes" id="UP000145651">
    <property type="component" value="Segment"/>
</dbReference>
<dbReference type="Proteomes" id="UP000146108">
    <property type="component" value="Segment"/>
</dbReference>
<dbReference type="Proteomes" id="UP000146181">
    <property type="component" value="Segment"/>
</dbReference>
<dbReference type="Proteomes" id="UP000146296">
    <property type="component" value="Segment"/>
</dbReference>
<dbReference type="Proteomes" id="UP000148194">
    <property type="component" value="Segment"/>
</dbReference>
<dbReference type="Proteomes" id="UP000153467">
    <property type="component" value="Segment"/>
</dbReference>
<dbReference type="Proteomes" id="UP000160648">
    <property type="component" value="Segment"/>
</dbReference>
<dbReference type="Proteomes" id="UP000164441">
    <property type="component" value="Segment"/>
</dbReference>
<dbReference type="Proteomes" id="UP000172416">
    <property type="component" value="Segment"/>
</dbReference>
<dbReference type="Proteomes" id="UP000180358">
    <property type="component" value="Segment"/>
</dbReference>
<dbReference type="GO" id="GO:0044173">
    <property type="term" value="C:host cell endoplasmic reticulum-Golgi intermediate compartment membrane"/>
    <property type="evidence" value="ECO:0007669"/>
    <property type="project" value="UniProtKB-SubCell"/>
</dbReference>
<dbReference type="GO" id="GO:0020002">
    <property type="term" value="C:host cell plasma membrane"/>
    <property type="evidence" value="ECO:0007669"/>
    <property type="project" value="UniProtKB-SubCell"/>
</dbReference>
<dbReference type="GO" id="GO:0016020">
    <property type="term" value="C:membrane"/>
    <property type="evidence" value="ECO:0007669"/>
    <property type="project" value="UniProtKB-UniRule"/>
</dbReference>
<dbReference type="GO" id="GO:0019031">
    <property type="term" value="C:viral envelope"/>
    <property type="evidence" value="ECO:0000303"/>
    <property type="project" value="ComplexPortal"/>
</dbReference>
<dbReference type="GO" id="GO:0055036">
    <property type="term" value="C:virion membrane"/>
    <property type="evidence" value="ECO:0000304"/>
    <property type="project" value="Reactome"/>
</dbReference>
<dbReference type="GO" id="GO:0046789">
    <property type="term" value="F:host cell surface receptor binding"/>
    <property type="evidence" value="ECO:0000353"/>
    <property type="project" value="BHF-UCL"/>
</dbReference>
<dbReference type="GO" id="GO:0042802">
    <property type="term" value="F:identical protein binding"/>
    <property type="evidence" value="ECO:0000353"/>
    <property type="project" value="IntAct"/>
</dbReference>
<dbReference type="GO" id="GO:0075509">
    <property type="term" value="P:endocytosis involved in viral entry into host cell"/>
    <property type="evidence" value="ECO:0007669"/>
    <property type="project" value="UniProtKB-UniRule"/>
</dbReference>
<dbReference type="GO" id="GO:0039654">
    <property type="term" value="P:fusion of virus membrane with host endosome membrane"/>
    <property type="evidence" value="ECO:0007669"/>
    <property type="project" value="UniProtKB-UniRule"/>
</dbReference>
<dbReference type="GO" id="GO:0019064">
    <property type="term" value="P:fusion of virus membrane with host plasma membrane"/>
    <property type="evidence" value="ECO:0007669"/>
    <property type="project" value="UniProtKB-UniRule"/>
</dbReference>
<dbReference type="GO" id="GO:0061025">
    <property type="term" value="P:membrane fusion"/>
    <property type="evidence" value="ECO:0000303"/>
    <property type="project" value="ComplexPortal"/>
</dbReference>
<dbReference type="GO" id="GO:0046598">
    <property type="term" value="P:positive regulation of viral entry into host cell"/>
    <property type="evidence" value="ECO:0000269"/>
    <property type="project" value="ComplexPortal"/>
</dbReference>
<dbReference type="GO" id="GO:0046813">
    <property type="term" value="P:receptor-mediated virion attachment to host cell"/>
    <property type="evidence" value="ECO:0000314"/>
    <property type="project" value="BHF-UCL"/>
</dbReference>
<dbReference type="GO" id="GO:0052170">
    <property type="term" value="P:symbiont-mediated suppression of host innate immune response"/>
    <property type="evidence" value="ECO:0007669"/>
    <property type="project" value="UniProtKB-KW"/>
</dbReference>
<dbReference type="GO" id="GO:0039587">
    <property type="term" value="P:symbiont-mediated-mediated suppression of host tetherin activity"/>
    <property type="evidence" value="ECO:0007669"/>
    <property type="project" value="UniProtKB-KW"/>
</dbReference>
<dbReference type="CDD" id="cd21624">
    <property type="entry name" value="SARS-CoV-like_Spike_S1_NTD"/>
    <property type="match status" value="1"/>
</dbReference>
<dbReference type="CDD" id="cd22378">
    <property type="entry name" value="SARS-CoV-like_Spike_SD1-2_S1-S2_S2"/>
    <property type="match status" value="1"/>
</dbReference>
<dbReference type="CDD" id="cd21481">
    <property type="entry name" value="SARS-CoV_Spike_S1_RBD"/>
    <property type="match status" value="1"/>
</dbReference>
<dbReference type="DisProt" id="DP02879"/>
<dbReference type="FunFam" id="1.20.5.300:FF:000003">
    <property type="entry name" value="Spike glycoprotein"/>
    <property type="match status" value="1"/>
</dbReference>
<dbReference type="FunFam" id="2.60.120.960:FF:000001">
    <property type="entry name" value="Spike glycoprotein"/>
    <property type="match status" value="1"/>
</dbReference>
<dbReference type="Gene3D" id="1.20.5.300">
    <property type="match status" value="1"/>
</dbReference>
<dbReference type="Gene3D" id="3.30.70.1840">
    <property type="match status" value="2"/>
</dbReference>
<dbReference type="Gene3D" id="1.20.5.790">
    <property type="entry name" value="Single helix bin"/>
    <property type="match status" value="1"/>
</dbReference>
<dbReference type="Gene3D" id="2.60.120.960">
    <property type="entry name" value="Spike glycoprotein, N-terminal domain"/>
    <property type="match status" value="1"/>
</dbReference>
<dbReference type="HAMAP" id="MF_04099">
    <property type="entry name" value="BETA_CORONA_SPIKE"/>
    <property type="match status" value="1"/>
</dbReference>
<dbReference type="InterPro" id="IPR032500">
    <property type="entry name" value="bCoV_S1_N"/>
</dbReference>
<dbReference type="InterPro" id="IPR042578">
    <property type="entry name" value="BETA_CORONA_SPIKE"/>
</dbReference>
<dbReference type="InterPro" id="IPR043473">
    <property type="entry name" value="S2_sf_CoV"/>
</dbReference>
<dbReference type="InterPro" id="IPR043002">
    <property type="entry name" value="Spike_N_sf"/>
</dbReference>
<dbReference type="InterPro" id="IPR044341">
    <property type="entry name" value="Spike_S1_N_SARS-CoV-like"/>
</dbReference>
<dbReference type="InterPro" id="IPR018548">
    <property type="entry name" value="Spike_S1_RBD_bCoV"/>
</dbReference>
<dbReference type="InterPro" id="IPR044370">
    <property type="entry name" value="Spike_S1_RBD_SARS-CoV"/>
</dbReference>
<dbReference type="InterPro" id="IPR036326">
    <property type="entry name" value="Spike_S1_RBD_sf_bCoV"/>
</dbReference>
<dbReference type="InterPro" id="IPR002552">
    <property type="entry name" value="Spike_S2_CoV"/>
</dbReference>
<dbReference type="InterPro" id="IPR044873">
    <property type="entry name" value="Spike_S2_CoV_HR1"/>
</dbReference>
<dbReference type="InterPro" id="IPR044874">
    <property type="entry name" value="Spike_S2_CoV_HR2"/>
</dbReference>
<dbReference type="Pfam" id="PF16451">
    <property type="entry name" value="bCoV_S1_N"/>
    <property type="match status" value="1"/>
</dbReference>
<dbReference type="Pfam" id="PF09408">
    <property type="entry name" value="bCoV_S1_RBD"/>
    <property type="match status" value="1"/>
</dbReference>
<dbReference type="Pfam" id="PF01601">
    <property type="entry name" value="CoV_S2"/>
    <property type="match status" value="1"/>
</dbReference>
<dbReference type="SUPFAM" id="SSF111474">
    <property type="entry name" value="Coronavirus S2 glycoprotein"/>
    <property type="match status" value="2"/>
</dbReference>
<dbReference type="SUPFAM" id="SSF143587">
    <property type="entry name" value="SARS receptor-binding domain-like"/>
    <property type="match status" value="1"/>
</dbReference>
<dbReference type="PROSITE" id="PS51921">
    <property type="entry name" value="BCOV_S1_CTD"/>
    <property type="match status" value="1"/>
</dbReference>
<dbReference type="PROSITE" id="PS51922">
    <property type="entry name" value="BCOV_S1_NTD"/>
    <property type="match status" value="1"/>
</dbReference>
<dbReference type="PROSITE" id="PS51923">
    <property type="entry name" value="COV_S2_HR1"/>
    <property type="match status" value="1"/>
</dbReference>
<dbReference type="PROSITE" id="PS51924">
    <property type="entry name" value="COV_S2_HR2"/>
    <property type="match status" value="1"/>
</dbReference>
<sequence length="1255" mass="139125">MFIFLLFLTLTSGSDLDRCTTFDDVQAPNYTQHTSSMRGVYYPDEIFRSDTLYLTQDLFLPFYSNVTGFHTINHTFGNPVIPFKDGIYFAATEKSNVVRGWVFGSTMNNKSQSVIIINNSTNVVIRACNFELCDNPFFAVSKPMGTQTHTMIFDNAFNCTFEYISDAFSLDVSEKSGNFKHLREFVFKNKDGFLYVYKGYQPIDVVRDLPSGFNTLKPIFKLPLGINITNFRAILTAFSPAQDIWGTSAAAYFVGYLKPTTFMLKYDENGTITDAVDCSQNPLAELKCSVKSFEIDKGIYQTSNFRVVPSGDVVRFPNITNLCPFGEVFNATKFPSVYAWERKKISNCVADYSVLYNSTFFSTFKCYGVSATKLNDLCFSNVYADSFVVKGDDVRQIAPGQTGVIADYNYKLPDDFMGCVLAWNTRNIDATSTGNYNYKYRYLRHGKLRPFERDISNVPFSPDGKPCTPPALNCYWPLNDYGFYTTTGIGYQPYRVVVLSFELLNAPATVCGPKLSTDLIKNQCVNFNFNGLTGTGVLTPSSKRFQPFQQFGRDVSDFTDSVRDPKTSEILDISPCSFGGVSVITPGTNASSEVAVLYQDVNCTDVSTAIHADQLTPAWRIYSTGNNVFQTQAGCLIGAEHVDTSYECDIPIGAGICASYHTVSLLRSTSQKSIVAYTMSLGADSSIAYSNNTIAIPTNFSISITTEVMPVSMAKTSVDCNMYICGDSTECANLLLQYGSFCTQLNRALSGIAAEQDRNTREVFAQVKQMYKTPTLKYFGGFNFSQILPDPLKPTKRSFIEDLLFNKVTLADAGFMKQYGECLGDINARDLICAQKFNGLTVLPPLLTDDMIAAYTAALVSGTATAGWTFGAGAALQIPFAMQMAYRFNGIGVTQNVLYENQKQIANQFNKAISQIQESLTTTSTALGKLQDVVNQNAQALNTLVKQLSSNFGAISSVLNDILSRLDKVEAEVQIDRLITGRLQSLQTYVTQQLIRAAEIRASANLAATKMSECVLGQSKRVDFCGKGYHLMSFPQAAPHGVVFLHVTYVPSQERNFTTAPAICHEGKAYFPREGVFVFNGTSWFITQRNFFSPQIITTDNTFVSGNCDVVIGIINNTVYDPLQPELDSFKEELDKYFKNHTSPDVDLGDISGINASVVNIQKEIDRLNEVAKNLNESLIDLQELGKYEQYIKWPWYVWLGFIAGLIAIVMVTILLCCMTSCCSCLKGACSCGSCCKFDEDDSEPVLKGVKLHYT</sequence>
<reference key="1">
    <citation type="journal article" date="2003" name="Science">
        <title>Characterization of a novel coronavirus associated with severe acute respiratory syndrome.</title>
        <authorList>
            <person name="Rota P.A."/>
            <person name="Oberste M.S."/>
            <person name="Monroe S.S."/>
            <person name="Nix W.A."/>
            <person name="Campagnoli R."/>
            <person name="Icenogle J.P."/>
            <person name="Penaranda S."/>
            <person name="Bankamp B."/>
            <person name="Maher K."/>
            <person name="Chen M.-H."/>
            <person name="Tong S."/>
            <person name="Tamin A."/>
            <person name="Lowe L."/>
            <person name="Frace M."/>
            <person name="DeRisi J.L."/>
            <person name="Chen Q."/>
            <person name="Wang D."/>
            <person name="Erdman D.D."/>
            <person name="Peret T.C.T."/>
            <person name="Burns C."/>
            <person name="Ksiazek T.G."/>
            <person name="Rollin P.E."/>
            <person name="Sanchez A."/>
            <person name="Liffick S."/>
            <person name="Holloway B."/>
            <person name="Limor J."/>
            <person name="McCaustland K."/>
            <person name="Olsen-Rasmussen M."/>
            <person name="Fouchier R."/>
            <person name="Guenther S."/>
            <person name="Osterhaus A.D.M.E."/>
            <person name="Drosten C."/>
            <person name="Pallansch M.A."/>
            <person name="Anderson L.J."/>
            <person name="Bellini W.J."/>
        </authorList>
    </citation>
    <scope>NUCLEOTIDE SEQUENCE [GENOMIC RNA]</scope>
    <source>
        <strain>Isolate Urbani</strain>
    </source>
</reference>
<reference key="2">
    <citation type="journal article" date="2003" name="Science">
        <title>The genome sequence of the SARS-associated coronavirus.</title>
        <authorList>
            <person name="Marra M.A."/>
            <person name="Jones S.J.M."/>
            <person name="Astell C.R."/>
            <person name="Holt R.A."/>
            <person name="Brooks-Wilson A."/>
            <person name="Butterfield Y.S.N."/>
            <person name="Khattra J."/>
            <person name="Asano J.K."/>
            <person name="Barber S.A."/>
            <person name="Chan S.Y."/>
            <person name="Cloutier A."/>
            <person name="Coughlin S.M."/>
            <person name="Freeman D."/>
            <person name="Girn N."/>
            <person name="Griffith O.L."/>
            <person name="Leach S.R."/>
            <person name="Mayo M."/>
            <person name="McDonald H."/>
            <person name="Montgomery S.B."/>
            <person name="Pandoh P.K."/>
            <person name="Petrescu A.S."/>
            <person name="Robertson A.G."/>
            <person name="Schein J.E."/>
            <person name="Siddiqui A."/>
            <person name="Smailus D.E."/>
            <person name="Stott J.M."/>
            <person name="Yang G.S."/>
            <person name="Plummer F."/>
            <person name="Andonov A."/>
            <person name="Artsob H."/>
            <person name="Bastien N."/>
            <person name="Bernard K."/>
            <person name="Booth T.F."/>
            <person name="Bowness D."/>
            <person name="Czub M."/>
            <person name="Drebot M."/>
            <person name="Fernando L."/>
            <person name="Flick R."/>
            <person name="Garbutt M."/>
            <person name="Gray M."/>
            <person name="Grolla A."/>
            <person name="Jones S."/>
            <person name="Feldmann H."/>
            <person name="Meyers A."/>
            <person name="Kabani A."/>
            <person name="Li Y."/>
            <person name="Normand S."/>
            <person name="Stroher U."/>
            <person name="Tipples G.A."/>
            <person name="Tyler S."/>
            <person name="Vogrig R."/>
            <person name="Ward D."/>
            <person name="Watson B."/>
            <person name="Brunham R.C."/>
            <person name="Krajden M."/>
            <person name="Petric M."/>
            <person name="Skowronski D.M."/>
            <person name="Upton C."/>
            <person name="Roper R.L."/>
        </authorList>
    </citation>
    <scope>NUCLEOTIDE SEQUENCE [GENOMIC RNA]</scope>
    <source>
        <strain>Isolate Tor2</strain>
    </source>
</reference>
<reference key="3">
    <citation type="journal article" date="2003" name="N. Engl. J. Med.">
        <title>Coronavirus genomic-sequence variations and the epidemiology of the severe acute respiratory syndrome.</title>
        <authorList>
            <person name="Tsui S.K.W."/>
            <person name="Chim S.S.C."/>
            <person name="Lo Y.M.D."/>
        </authorList>
    </citation>
    <scope>NUCLEOTIDE SEQUENCE [GENOMIC RNA]</scope>
    <source>
        <strain>Isolate CUHK-Su10</strain>
        <strain>Isolate CUHK-W1</strain>
    </source>
</reference>
<reference key="4">
    <citation type="journal article" date="2003" name="Exp. Biol. Med.">
        <title>The complete genome sequence of severe acute respiratory syndrome coronavirus strain HKU-39849 (HK-39).</title>
        <authorList>
            <person name="Zeng F.Y."/>
            <person name="Chan C.W."/>
            <person name="Chan M.N."/>
            <person name="Chen J.D."/>
            <person name="Chow K.Y.C."/>
            <person name="Hon C.C.C."/>
            <person name="Hui R.K.H."/>
            <person name="Li J."/>
            <person name="Li V.Y.Y."/>
            <person name="Wang C.Y."/>
            <person name="Wang P.Y."/>
            <person name="Guan Y."/>
            <person name="Zheng B."/>
            <person name="Poon L.L.M."/>
            <person name="Chan K.H."/>
            <person name="Yuen K.Y."/>
            <person name="Peiris J.S.M."/>
            <person name="Leung F.C."/>
        </authorList>
    </citation>
    <scope>NUCLEOTIDE SEQUENCE [GENOMIC RNA]</scope>
    <source>
        <strain>Isolate HKU-39849</strain>
    </source>
</reference>
<reference key="5">
    <citation type="journal article" date="2003" name="Science">
        <title>Isolation and characterization of viruses related to the SARS coronavirus from animals in southern China.</title>
        <authorList>
            <person name="Guan Y."/>
            <person name="Zheng B.J."/>
            <person name="He Y.Q."/>
            <person name="Liu X.L."/>
            <person name="Zhuang Z.X."/>
            <person name="Cheung C.L."/>
            <person name="Luo S.W."/>
            <person name="Li P.H."/>
            <person name="Zhang L.J."/>
            <person name="Guan Y.J."/>
            <person name="Butt K.M."/>
            <person name="Wong K.L."/>
            <person name="Chan K.W."/>
            <person name="Lim W."/>
            <person name="Shortridge K.F."/>
            <person name="Yuen K.Y."/>
            <person name="Peiris J.S.M."/>
            <person name="Poon L.L.M."/>
        </authorList>
    </citation>
    <scope>NUCLEOTIDE SEQUENCE [GENOMIC RNA]</scope>
    <source>
        <strain>Isolate GZ50</strain>
        <strain>Isolate HKU-36871</strain>
    </source>
</reference>
<reference key="6">
    <citation type="submission" date="2003-04" db="EMBL/GenBank/DDBJ databases">
        <authorList>
            <person name="Qin E."/>
            <person name="Zhu Q."/>
            <person name="Yu M."/>
            <person name="Fan B."/>
            <person name="Chang G."/>
            <person name="Si B."/>
            <person name="Yang B."/>
            <person name="Peng W."/>
            <person name="Jiang T."/>
            <person name="Liu B."/>
            <person name="Deng Y."/>
            <person name="Liu H."/>
            <person name="Zhang Y."/>
            <person name="Wang C."/>
            <person name="Li Y."/>
            <person name="Gan Y."/>
            <person name="Li X."/>
            <person name="Lu F."/>
            <person name="Tan G."/>
            <person name="Yang R."/>
            <person name="Cao W.S."/>
            <person name="Wang J."/>
            <person name="Chen W."/>
            <person name="Cong L."/>
            <person name="Deng Y."/>
            <person name="Dong W."/>
            <person name="Han Y."/>
            <person name="Hu W."/>
            <person name="Lei M."/>
            <person name="Li C."/>
            <person name="Li G."/>
            <person name="Li G."/>
            <person name="Li H."/>
            <person name="Li S."/>
            <person name="Li S."/>
            <person name="Li W."/>
            <person name="Li W."/>
            <person name="Lin W."/>
            <person name="Liu J."/>
            <person name="Liu Z."/>
            <person name="Lu H."/>
            <person name="Ni P."/>
            <person name="Qi Q."/>
            <person name="Sun Y."/>
            <person name="Tang L."/>
            <person name="Tong Z."/>
            <person name="Wang J."/>
            <person name="Wang X."/>
            <person name="Wu Q."/>
            <person name="Xi Y."/>
            <person name="Xu Z."/>
            <person name="Yang L."/>
            <person name="Ye C."/>
            <person name="Ye J."/>
            <person name="Zhang B."/>
            <person name="Zhang F."/>
            <person name="Zhang J."/>
            <person name="Zhang X."/>
            <person name="Zhou J."/>
            <person name="Yang H."/>
        </authorList>
    </citation>
    <scope>NUCLEOTIDE SEQUENCE [GENOMIC RNA]</scope>
    <source>
        <strain>Isolate BJ01</strain>
        <strain>Isolate BJ02</strain>
        <strain>Isolate BJ03</strain>
        <strain>Isolate BJ04</strain>
        <strain>Isolate GD01</strain>
    </source>
</reference>
<reference key="7">
    <citation type="journal article" date="2003" name="Lancet">
        <title>Comparative full-length genome sequence analysis of 14 SARS coronavirus isolates and common mutations associated with putative origins of infection.</title>
        <authorList>
            <person name="Ruan Y."/>
            <person name="Wei C.L."/>
            <person name="Ling A.E."/>
            <person name="Vega V.B."/>
            <person name="Thoreau H."/>
            <person name="Se Thoe S.Y."/>
            <person name="Chia J.-M."/>
            <person name="Ng P."/>
            <person name="Chiu K.P."/>
            <person name="Lim L."/>
            <person name="Zhang T."/>
            <person name="Chan K.P."/>
            <person name="Oon L.E.L."/>
            <person name="Ng M.L."/>
            <person name="Leo S.Y."/>
            <person name="Ng L.F.P."/>
            <person name="Ren E.C."/>
            <person name="Stanton L.W."/>
            <person name="Long P.M."/>
            <person name="Liu E.T."/>
        </authorList>
    </citation>
    <scope>NUCLEOTIDE SEQUENCE [GENOMIC RNA]</scope>
    <source>
        <strain>Isolate Sin2500</strain>
        <strain>Isolate Sin2677</strain>
        <strain>Isolate Sin2679</strain>
        <strain>Isolate Sin2748</strain>
        <strain>Isolate sin2774</strain>
    </source>
</reference>
<reference key="8">
    <citation type="journal article" date="2003" name="Lancet">
        <authorList>
            <person name="Ruan Y."/>
            <person name="Wei C.L."/>
            <person name="Ling A.E."/>
            <person name="Vega V.B."/>
            <person name="Thoreau H."/>
            <person name="Se Thoe S.Y."/>
            <person name="Chia J.-M."/>
            <person name="Ng P."/>
            <person name="Chiu K.P."/>
            <person name="Lim L."/>
            <person name="Zhang T."/>
            <person name="Chan K.P."/>
            <person name="Oon L.E.L."/>
            <person name="Ng M.L."/>
            <person name="Leo S.Y."/>
            <person name="Ng L.F.P."/>
            <person name="Ren E.C."/>
            <person name="Stanton L.W."/>
            <person name="Long P.M."/>
            <person name="Liu E.T."/>
        </authorList>
    </citation>
    <scope>ERRATUM OF PUBMED:12781537</scope>
</reference>
<reference key="9">
    <citation type="submission" date="2003-05" db="EMBL/GenBank/DDBJ databases">
        <title>The complete genome of SARS coronavirus clone TW1.</title>
        <authorList>
            <person name="Yeh S.-H."/>
            <person name="Kao C.-L."/>
            <person name="Tsai C.-Y."/>
            <person name="Liu C.-J."/>
            <person name="Chen D.-S."/>
            <person name="Chen P.-J."/>
        </authorList>
    </citation>
    <scope>NUCLEOTIDE SEQUENCE [GENOMIC RNA]</scope>
    <source>
        <strain>Isolate TW1</strain>
    </source>
</reference>
<reference key="10">
    <citation type="submission" date="2003-05" db="EMBL/GenBank/DDBJ databases">
        <title>SARS virus is a close relative of type II coronaviruses.</title>
        <authorList>
            <person name="Eickmann M."/>
            <person name="Becker S."/>
            <person name="Klenk H.-D."/>
            <person name="Doerr H.W."/>
            <person name="Stadler K."/>
            <person name="Censini S."/>
            <person name="Guidotti S."/>
            <person name="Masignani V."/>
            <person name="Scarselli M."/>
            <person name="Mora M."/>
            <person name="Donati C."/>
            <person name="Han J."/>
            <person name="Song H.C."/>
            <person name="Abrignani S."/>
            <person name="Covacci A."/>
            <person name="Rappuoli R."/>
        </authorList>
    </citation>
    <scope>NUCLEOTIDE SEQUENCE [GENOMIC RNA]</scope>
    <source>
        <strain>Isolate FRA</strain>
    </source>
</reference>
<reference key="11">
    <citation type="journal article" date="2003" name="J. Gen. Virol.">
        <title>Mechanisms and enzymes involved in SARS coronavirus genome expression.</title>
        <authorList>
            <person name="Thiel V."/>
            <person name="Ivanov K.A."/>
            <person name="Putics A."/>
            <person name="Hertzig T."/>
            <person name="Schelle B."/>
            <person name="Bayer S."/>
            <person name="Weissbrich B."/>
            <person name="Snijder E.J."/>
            <person name="Rabenau H."/>
            <person name="Doerr H.W."/>
            <person name="Gorbalenya A.E."/>
            <person name="Ziebuhr J."/>
        </authorList>
    </citation>
    <scope>NUCLEOTIDE SEQUENCE [GENOMIC RNA]</scope>
    <source>
        <strain>Isolate Frankfurt 1</strain>
    </source>
</reference>
<reference key="12">
    <citation type="submission" date="2003-06" db="EMBL/GenBank/DDBJ databases">
        <title>Genomic sequence of SARS isolate from the first fatal case in Taiwan.</title>
        <authorList>
            <person name="Yang J.-Y."/>
            <person name="Lin J.-H."/>
            <person name="Chiu S.-C."/>
            <person name="Wang S.-F."/>
            <person name="Lee S.C."/>
            <person name="Lin Y.-C."/>
            <person name="Hsu C.-K."/>
            <person name="Chen H.-Y."/>
            <person name="Chang J.G."/>
            <person name="Chen P.-J."/>
            <person name="Su I.-J."/>
        </authorList>
    </citation>
    <scope>NUCLEOTIDE SEQUENCE [GENOMIC RNA]</scope>
    <source>
        <strain>Isolate TWC</strain>
    </source>
</reference>
<reference key="13">
    <citation type="submission" date="2003-06" db="EMBL/GenBank/DDBJ databases">
        <title>SARS coronavirus ZJ01 isolate spike glycoprotein.</title>
        <authorList>
            <person name="Cong L.-M."/>
            <person name="Ding G.-Q."/>
            <person name="Lu Y.-Y."/>
            <person name="Weng J.-Q."/>
            <person name="Yan J.-Y."/>
            <person name="Hu N.-P."/>
            <person name="Wo J.-E."/>
            <person name="Chen S.-Y."/>
            <person name="Zhang Y.-J."/>
            <person name="Mei L.-L."/>
            <person name="Wang Z.-G."/>
            <person name="Yao J."/>
            <person name="Zhu H.-P."/>
            <person name="Lu Q.-Y."/>
            <person name="Li M.-H."/>
            <person name="Gong L.-M."/>
            <person name="Shi W."/>
            <person name="Li L.-J."/>
        </authorList>
    </citation>
    <scope>NUCLEOTIDE SEQUENCE [MRNA]</scope>
    <source>
        <strain>Isolate ZJ01</strain>
    </source>
</reference>
<reference key="14">
    <citation type="submission" date="2003-06" db="EMBL/GenBank/DDBJ databases">
        <authorList>
            <person name="Yuan Z."/>
            <person name="Zhang X."/>
            <person name="Hu Y."/>
            <person name="Lan S."/>
            <person name="Wang H."/>
            <person name="Zhou Z."/>
            <person name="Wen Y."/>
        </authorList>
    </citation>
    <scope>NUCLEOTIDE SEQUENCE [GENOMIC RNA]</scope>
    <source>
        <strain>Isolate Shanghai LY</strain>
    </source>
</reference>
<reference key="15">
    <citation type="submission" date="2003-07" db="EMBL/GenBank/DDBJ databases">
        <authorList>
            <person name="Chang J.-G.C."/>
            <person name="Lin T.-H."/>
            <person name="Chen C.-M."/>
            <person name="Lin C.-S."/>
            <person name="Chan W.-L."/>
            <person name="Shih M.-C."/>
        </authorList>
    </citation>
    <scope>NUCLEOTIDE SEQUENCE [GENOMIC RNA]</scope>
    <source>
        <strain>Isolate Taiwan TC1</strain>
        <strain>Isolate Taiwan TC2</strain>
        <strain>Isolate Taiwan TC3</strain>
    </source>
</reference>
<reference key="16">
    <citation type="submission" date="2003-07" db="EMBL/GenBank/DDBJ databases">
        <authorList>
            <person name="Shu H.Y."/>
            <person name="Wu K.M."/>
            <person name="Tsai S.F."/>
        </authorList>
    </citation>
    <scope>NUCLEOTIDE SEQUENCE [GENOMIC RNA]</scope>
    <source>
        <strain>Isolate TWH</strain>
        <strain>Isolate TWJ</strain>
        <strain>Isolate TWK</strain>
        <strain>Isolate TWS</strain>
        <strain>Isolate TWY</strain>
    </source>
</reference>
<reference key="17">
    <citation type="submission" date="2003-07" db="EMBL/GenBank/DDBJ databases">
        <authorList>
            <person name="Canducci F."/>
            <person name="Clementi M."/>
            <person name="Poli G."/>
            <person name="Vicenzi E."/>
        </authorList>
    </citation>
    <scope>NUCLEOTIDE SEQUENCE [GENOMIC RNA]</scope>
    <source>
        <strain>Isolate HSR 1</strain>
    </source>
</reference>
<reference key="18">
    <citation type="submission" date="2003-08" db="EMBL/GenBank/DDBJ databases">
        <authorList>
            <person name="Yang J.-Y."/>
            <person name="Lin J.-H."/>
            <person name="Chiu S.-C."/>
            <person name="Wang S.-F."/>
            <person name="Lee H.-C."/>
            <person name="Lin Y.-C."/>
            <person name="Hsu C.-K."/>
            <person name="Chen H.-Y."/>
            <person name="Chen P.-J."/>
            <person name="Su I.-J."/>
        </authorList>
    </citation>
    <scope>NUCLEOTIDE SEQUENCE [GENOMIC RNA]</scope>
    <source>
        <strain>Isolate TWC2</strain>
        <strain>Isolate TWC3</strain>
    </source>
</reference>
<reference key="19">
    <citation type="submission" date="2003-10" db="EMBL/GenBank/DDBJ databases">
        <authorList>
            <person name="Balotta C."/>
            <person name="Corvasce S."/>
            <person name="Violin M."/>
            <person name="Galli M."/>
            <person name="Moroni M."/>
            <person name="Vigevani G.M."/>
            <person name="Ruan Y.J."/>
            <person name="Salemi M."/>
        </authorList>
    </citation>
    <scope>NUCLEOTIDE SEQUENCE [GENOMIC RNA]</scope>
    <source>
        <strain>Isolate AS</strain>
    </source>
</reference>
<reference key="20">
    <citation type="submission" date="2004-01" db="EMBL/GenBank/DDBJ databases">
        <title>Analysis of SARS coronavirus genome in Shanghai isolates.</title>
        <authorList>
            <person name="Yuan Z."/>
            <person name="Zhang X."/>
            <person name="Hu Y."/>
            <person name="Lan S."/>
            <person name="Wang H."/>
            <person name="Zhou Z."/>
            <person name="Wen Y."/>
        </authorList>
    </citation>
    <scope>NUCLEOTIDE SEQUENCE [GENOMIC RNA]</scope>
    <source>
        <strain>Isolate Shanghai QXC1</strain>
    </source>
</reference>
<reference key="21">
    <citation type="journal article" date="2005" name="Proc. Natl. Acad. Sci. U.S.A.">
        <title>Cross-host evolution of severe acute respiratory syndrome coronavirus in palm civet and human.</title>
        <authorList>
            <person name="Song H.D."/>
            <person name="Tu C.C."/>
            <person name="Zhang G.W."/>
            <person name="Wang S.Y."/>
            <person name="Zheng K."/>
            <person name="Lei L.C."/>
            <person name="Chen Q.X."/>
            <person name="Gao Y.W."/>
            <person name="Zhou H.Q."/>
            <person name="Xiang H."/>
            <person name="Zheng H.J."/>
            <person name="Chern S.W."/>
            <person name="Cheng F."/>
            <person name="Pan C.M."/>
            <person name="Xuan H."/>
            <person name="Chen S.J."/>
            <person name="Luo H.M."/>
            <person name="Zhou D.H."/>
            <person name="Liu Y.F."/>
            <person name="He J.F."/>
            <person name="Qin P.Z."/>
            <person name="Li L.H."/>
            <person name="Ren Y.Q."/>
            <person name="Liang W.J."/>
            <person name="Yu Y.D."/>
            <person name="Anderson L."/>
            <person name="Wang M."/>
            <person name="Xu R.H."/>
            <person name="Wu X.W."/>
            <person name="Zheng H.Y."/>
            <person name="Chen J.D."/>
            <person name="Liang G."/>
            <person name="Gao Y."/>
            <person name="Liao M."/>
            <person name="Fang L."/>
            <person name="Jiang L.Y."/>
            <person name="Li H."/>
            <person name="Chen F."/>
            <person name="Di B."/>
            <person name="He L.J."/>
            <person name="Lin J.Y."/>
            <person name="Tong S."/>
            <person name="Kong X."/>
            <person name="Du L."/>
            <person name="Hao P."/>
            <person name="Tang H."/>
            <person name="Bernini A."/>
            <person name="Yu X.J."/>
            <person name="Spiga O."/>
            <person name="Guo Z.M."/>
            <person name="Pan H.Y."/>
            <person name="He W.Z."/>
            <person name="Manuguerra J.C."/>
            <person name="Fontanet A."/>
            <person name="Danchin A."/>
            <person name="Niccolai N."/>
            <person name="Li Y.X."/>
            <person name="Wu C.I."/>
            <person name="Zhao G.P."/>
        </authorList>
    </citation>
    <scope>NUCLEOTIDE SEQUENCE [GENOMIC RNA]</scope>
    <source>
        <strain>Isolate GD03</strain>
    </source>
</reference>
<reference key="22">
    <citation type="journal article" date="2003" name="Nature">
        <title>Angiotensin-converting enzyme 2 is a functional receptor for the SARS coronavirus.</title>
        <authorList>
            <person name="Li W."/>
            <person name="Moore M.J."/>
            <person name="Vasilieva N."/>
            <person name="Sui J."/>
            <person name="Wong S.-K."/>
            <person name="Berne M.A."/>
            <person name="Somasundaran M."/>
            <person name="Sullivan J.L."/>
            <person name="Luzuriaga K."/>
            <person name="Greenough T.C."/>
            <person name="Choe H."/>
            <person name="Farzan M."/>
        </authorList>
    </citation>
    <scope>INTERACTION WITH HUMAN ACE2</scope>
    <scope>CHARACTERIZATION OF CELLULAR RECEPTOR</scope>
</reference>
<reference key="23">
    <citation type="journal article" date="2004" name="J. Biol. Chem.">
        <title>A 193-amino acid fragment of the SARS coronavirus S protein efficiently binds angiotensin-converting enzyme 2.</title>
        <authorList>
            <person name="Wong S.K."/>
            <person name="Li W."/>
            <person name="Moore M.J."/>
            <person name="Choe H."/>
            <person name="Farzan M."/>
        </authorList>
    </citation>
    <scope>FUNCTION</scope>
    <scope>INTERACTION WITH HUMAN ACE2</scope>
    <scope>MUTAGENESIS OF CYS-323; CYS-348; GLU-452; ASP-454; ASP-463; CYS-467; CYS-474 AND ASP-480</scope>
</reference>
<reference key="24">
    <citation type="journal article" date="2004" name="Biochemistry">
        <title>Characterization of the heptad repeat regions, HR1 and HR2, and design of a fusion core structure model of the spike protein from severe acute respiratory syndrome (SARS) coronavirus.</title>
        <authorList>
            <person name="Xu Y."/>
            <person name="Zhu J."/>
            <person name="Liu Y."/>
            <person name="Lou Z."/>
            <person name="Yuan F."/>
            <person name="Liu Y."/>
            <person name="Cole D.K."/>
            <person name="Ni L."/>
            <person name="Su N."/>
            <person name="Qin L."/>
            <person name="Li X."/>
            <person name="Bai Z."/>
            <person name="Bell J.I."/>
            <person name="Pang H."/>
            <person name="Tien P."/>
            <person name="Gao G.F."/>
            <person name="Rao Z."/>
        </authorList>
    </citation>
    <scope>CHARACTERIZATION OF HEPTAD REPEAT REGIONS</scope>
</reference>
<reference key="25">
    <citation type="journal article" date="2004" name="Cell Res.">
        <title>The spike protein of severe acute respiratory syndrome (SARS) is cleaved in virus infected Vero-E6 cells.</title>
        <authorList>
            <person name="Wu X.D."/>
            <person name="Shang B."/>
            <person name="Yang R.F."/>
            <person name="Yu H."/>
            <person name="Ma Z.H."/>
            <person name="Shen X."/>
            <person name="Ji Y.Y."/>
            <person name="Lin Y."/>
            <person name="Wu Y.D."/>
            <person name="Lin G.M."/>
            <person name="Tian L."/>
            <person name="Gan X.Q."/>
            <person name="Yang S."/>
            <person name="Jiang W.H."/>
            <person name="Dai E.H."/>
            <person name="Wang X.Y."/>
            <person name="Jiang H.L."/>
            <person name="Xie Y.H."/>
            <person name="Zhu X.L."/>
            <person name="Pei G."/>
            <person name="Li L."/>
            <person name="Wu J.R."/>
            <person name="Sun B."/>
        </authorList>
    </citation>
    <scope>CLEAVAGE</scope>
</reference>
<reference key="26">
    <citation type="journal article" date="2004" name="Proc. Natl. Acad. Sci. U.S.A.">
        <title>CD209L (L-SIGN) is a receptor for severe acute respiratory syndrome coronavirus.</title>
        <authorList>
            <person name="Jeffers S.A."/>
            <person name="Tusell S.M."/>
            <person name="Gillim-Ross L."/>
            <person name="Hemmila E.M."/>
            <person name="Achenbach J.E."/>
            <person name="Babcock G.J."/>
            <person name="Thomas W.D. Jr."/>
            <person name="Thackray L.B."/>
            <person name="Young M.D."/>
            <person name="Mason R.J."/>
            <person name="Ambrosino D.M."/>
            <person name="Wentworth D.E."/>
            <person name="Demartini J.C."/>
            <person name="Holmes K.V."/>
        </authorList>
    </citation>
    <scope>FUNCTION</scope>
    <scope>INTERACTION WITH HUMAN CLEC4M/DC-SIGNR</scope>
</reference>
<reference key="27">
    <citation type="journal article" date="2004" name="Biochem. Biophys. Res. Commun.">
        <title>Oligomerization of the SARS-CoV S glycoprotein: dimerization of the N-terminus and trimerization of the ectodomain.</title>
        <authorList>
            <person name="Xiao X."/>
            <person name="Feng Y."/>
            <person name="Chakraborti S."/>
            <person name="Dimitrov D.S."/>
        </authorList>
    </citation>
    <scope>HOMOTRIMERIZATION</scope>
</reference>
<reference key="28">
    <citation type="journal article" date="2005" name="J. Virol.">
        <title>Identification and characterization of the putative fusion peptide of the severe acute respiratory syndrome-associated coronavirus spike protein.</title>
        <authorList>
            <person name="Sainz B. Jr."/>
            <person name="Rausch J.M."/>
            <person name="Gallaher W.R."/>
            <person name="Garry R.F."/>
            <person name="Wimley W.C."/>
        </authorList>
    </citation>
    <scope>CHARACTERIZATION OF FUSION PEPTIDE</scope>
</reference>
<reference key="29">
    <citation type="journal article" date="2005" name="J. Gen. Virol.">
        <title>Differential maturation and subcellular localization of severe acute respiratory syndrome coronavirus surface proteins S, M and E.</title>
        <authorList>
            <person name="Nal B."/>
            <person name="Chan C."/>
            <person name="Kien F."/>
            <person name="Siu L."/>
            <person name="Tse J."/>
            <person name="Chu K."/>
            <person name="Kam J."/>
            <person name="Staropoli I."/>
            <person name="Crescenzo-Chaigne B."/>
            <person name="Escriou N."/>
            <person name="van der Werf S."/>
            <person name="Yuen K.Y."/>
            <person name="Altmeyer R."/>
        </authorList>
    </citation>
    <scope>SUBCELLULAR LOCATION</scope>
</reference>
<reference key="30">
    <citation type="journal article" date="2005" name="EMBO J.">
        <title>Receptor and viral determinants of SARS-coronavirus adaptation to human ACE2.</title>
        <authorList>
            <person name="Li W."/>
            <person name="Zhang C."/>
            <person name="Sui J."/>
            <person name="Kuhn J.H."/>
            <person name="Moore M.J."/>
            <person name="Luo S."/>
            <person name="Wong S.-K."/>
            <person name="Huang I.-C."/>
            <person name="Xu K."/>
            <person name="Vasilieva N."/>
            <person name="Murakami A."/>
            <person name="He Y."/>
            <person name="Marasco W.A."/>
            <person name="Guan Y."/>
            <person name="Choe H."/>
            <person name="Farzan M."/>
        </authorList>
    </citation>
    <scope>CHARACTERIZATION OF VARIANTS ARG-344; SER-360; LYS-479 AND SER-487</scope>
</reference>
<reference key="31">
    <citation type="journal article" date="2005" name="Proc. Natl. Acad. Sci. U.S.A.">
        <title>Inhibitors of cathepsin L prevent severe acute respiratory syndrome coronavirus entry.</title>
        <authorList>
            <person name="Simmons G."/>
            <person name="Gosalia D.N."/>
            <person name="Rennekamp A.J."/>
            <person name="Reeves J.D."/>
            <person name="Diamond S.L."/>
            <person name="Bates P."/>
        </authorList>
    </citation>
    <scope>PROTEOLYSIS BY HUMAN CTSL</scope>
</reference>
<reference key="32">
    <citation type="journal article" date="2004" name="J. Virol.">
        <title>A novel severe acute respiratory syndrome coronavirus protein, U274, is transported to the cell surface and undergoes endocytosis.</title>
        <authorList>
            <person name="Tan Y.-J."/>
            <person name="Teng E."/>
            <person name="Shen S."/>
            <person name="Tan T.H.P."/>
            <person name="Goh P.-Y."/>
            <person name="Fielding B.C."/>
            <person name="Ooi E.-E."/>
            <person name="Tan H.-C."/>
            <person name="Lim S.G."/>
            <person name="Hong W."/>
        </authorList>
    </citation>
    <scope>INTERACTION WITH ACCESSORY PROTEIN 3A</scope>
</reference>
<reference key="33">
    <citation type="journal article" date="2006" name="J. Virol.">
        <title>Severe acute respiratory syndrome coronavirus 7a accessory protein is a viral structural protein.</title>
        <authorList>
            <person name="Huang C."/>
            <person name="Ito N."/>
            <person name="Tseng C.-T.K."/>
            <person name="Makino S."/>
        </authorList>
    </citation>
    <scope>INTERACTION WITH ACCESSORY PROTEIN 7A</scope>
</reference>
<reference key="34">
    <citation type="journal article" date="2006" name="Virology">
        <title>Furin cleavage of the SARS coronavirus spike glycoprotein enhances cell-cell fusion but does not affect virion entry.</title>
        <authorList>
            <person name="Follis K.E."/>
            <person name="York J."/>
            <person name="Nunberg J.H."/>
        </authorList>
    </citation>
    <scope>MUTAGENESIS OF ARG-667 AND LYS-672</scope>
</reference>
<reference key="35">
    <citation type="journal article" date="2007" name="Virology">
        <title>Palmitoylation of the cysteine-rich endodomain of the SARS-coronavirus spike glycoprotein is important for spike-mediated cell fusion.</title>
        <authorList>
            <person name="Petit C.M."/>
            <person name="Chouljenko V.N."/>
            <person name="Iyer A."/>
            <person name="Colgrove R."/>
            <person name="Farzan M."/>
            <person name="Knipe D.M."/>
            <person name="Kousoulas K.G."/>
        </authorList>
    </citation>
    <scope>PALMITOYLATION</scope>
</reference>
<reference key="36">
    <citation type="journal article" date="2007" name="J. Virol.">
        <title>The cytoplasmic tail of the severe acute respiratory syndrome coronavirus spike protein contains a novel endoplasmic reticulum retrieval signal that binds COPI and promotes interaction with membrane protein.</title>
        <authorList>
            <person name="McBride C.E."/>
            <person name="Li J."/>
            <person name="Machamer C.E."/>
        </authorList>
    </citation>
    <scope>ENDOPLASMIC RETICULUM RETENTION MOTIF</scope>
    <scope>MUTAGENESIS OF LYS-1251 AND HIS-1253</scope>
</reference>
<reference key="37">
    <citation type="journal article" date="2009" name="Proc. Natl. Acad. Sci. U.S.A.">
        <title>Activation of the SARS coronavirus spike protein via sequential proteolytic cleavage at two distinct sites.</title>
        <authorList>
            <person name="Belouzard S."/>
            <person name="Chu V.C."/>
            <person name="Whittaker G.R."/>
        </authorList>
    </citation>
    <scope>CLEAVAGE</scope>
    <scope>FUNCTION</scope>
</reference>
<reference key="38">
    <citation type="journal article" date="2010" name="Mol. Biol. Cell">
        <title>The SARS coronavirus E protein interacts with PALS1 and alters tight junction formation and epithelial morphogenesis.</title>
        <authorList>
            <person name="Teoh K.T."/>
            <person name="Siu Y.L."/>
            <person name="Chan W.L."/>
            <person name="Schlueter M.A."/>
            <person name="Liu C.J."/>
            <person name="Peiris J.S."/>
            <person name="Bruzzone R."/>
            <person name="Margolis B."/>
            <person name="Nal B."/>
        </authorList>
    </citation>
    <scope>SUBCELLULAR LOCATION</scope>
</reference>
<reference key="39">
    <citation type="journal article" date="2017" name="J. Mol. Biol.">
        <title>The SARS-CoV fusion peptide forms an extended bipartite fusion platform that perturbs membrane order in a calcium-dependent manner.</title>
        <authorList>
            <person name="Lai A.L."/>
            <person name="Millet J.K."/>
            <person name="Daniel S."/>
            <person name="Freed J.H."/>
            <person name="Whittaker G.R."/>
        </authorList>
    </citation>
    <scope>CHARACTERIZATION OF FUSION PEPTIDE</scope>
</reference>
<reference key="40">
    <citation type="journal article" date="2019" name="J. Med. Virol.">
        <title>Severe acute respiratory syndrome coronavirus spike protein counteracts BST2-mediated restriction of virus-like particle release.</title>
        <authorList>
            <person name="Wang S.M."/>
            <person name="Huang K.J."/>
            <person name="Wang C.T."/>
        </authorList>
    </citation>
    <scope>FUNCTION</scope>
</reference>
<reference key="41">
    <citation type="journal article" date="2004" name="J. Biol. Chem.">
        <title>Crystal structure of severe acute respiratory syndrome coronavirus spike protein fusion core.</title>
        <authorList>
            <person name="Xu Y."/>
            <person name="Lou Z."/>
            <person name="Liu Y."/>
            <person name="Pang H."/>
            <person name="Tien P."/>
            <person name="Gao G.F."/>
            <person name="Rao Z."/>
        </authorList>
    </citation>
    <scope>X-RAY CRYSTALLOGRAPHY (2.8 ANGSTROMS) OF 900-948</scope>
</reference>
<reference key="42">
    <citation type="journal article" date="2004" name="Proc. Natl. Acad. Sci. U.S.A.">
        <title>Structure of a proteolytically resistant core from the severe acute respiratory syndrome coronavirus S2 fusion protein.</title>
        <authorList>
            <person name="Supekar V.M."/>
            <person name="Bruckmann C."/>
            <person name="Ingallinella P."/>
            <person name="Bianchi E."/>
            <person name="Pessi A."/>
            <person name="Carfi A."/>
        </authorList>
    </citation>
    <scope>X-RAY CRYSTALLOGRAPHY (1.6 ANGSTROMS) OF 895-972 AND 1142-1180</scope>
</reference>
<reference key="43">
    <citation type="journal article" date="2003" name="Biochem. Biophys. Res. Commun.">
        <title>Molecular modelling of S1 and S2 subunits of SARS coronavirus spike glycoprotein.</title>
        <authorList>
            <person name="Spiga O."/>
            <person name="Bernini A."/>
            <person name="Ciutti A."/>
            <person name="Chiellini S."/>
            <person name="Menciassi N."/>
            <person name="Finetti F."/>
            <person name="Causarono V."/>
            <person name="Anselmi F."/>
            <person name="Prischi F."/>
            <person name="Niccolai N."/>
        </authorList>
    </citation>
    <scope>3D-STRUCTURE MODELING OF 17-680</scope>
</reference>
<reference key="44">
    <citation type="journal article" date="2005" name="Science">
        <title>Structure of SARS coronavirus spike receptor-binding domain complexed with receptor.</title>
        <authorList>
            <person name="Li F."/>
            <person name="Li W."/>
            <person name="Farzan M."/>
            <person name="Harrison S.C."/>
        </authorList>
    </citation>
    <scope>X-RAY CRYSTALLOGRAPHY (2.9 ANGSTROMS) OF 323-502 IN COMPLEX WITH HUMAN ACE2</scope>
</reference>
<reference key="45">
    <citation type="journal article" date="2006" name="Structure">
        <title>Structures and polymorphic interactions of two heptad-repeat regions of the SARS virus S2 protein.</title>
        <authorList>
            <person name="Deng Y."/>
            <person name="Liu J."/>
            <person name="Zheng Q."/>
            <person name="Yong W."/>
            <person name="Lu M."/>
        </authorList>
    </citation>
    <scope>X-RAY CRYSTALLOGRAPHY (1.7 ANGSTROMS) OF 1150-1193</scope>
</reference>